<feature type="chain" id="PRO_0000143080" description="Induced myeloid leukemia cell differentiation protein Mcl-1">
    <location>
        <begin position="1"/>
        <end position="350"/>
    </location>
</feature>
<feature type="transmembrane region" description="Helical" evidence="3">
    <location>
        <begin position="328"/>
        <end position="348"/>
    </location>
</feature>
<feature type="region of interest" description="Disordered" evidence="4">
    <location>
        <begin position="47"/>
        <end position="87"/>
    </location>
</feature>
<feature type="region of interest" description="PEST-like">
    <location>
        <begin position="104"/>
        <end position="175"/>
    </location>
</feature>
<feature type="region of interest" description="Disordered" evidence="4">
    <location>
        <begin position="148"/>
        <end position="171"/>
    </location>
</feature>
<feature type="short sequence motif" description="BH3">
    <location>
        <begin position="209"/>
        <end position="223"/>
    </location>
</feature>
<feature type="short sequence motif" description="BH1">
    <location>
        <begin position="252"/>
        <end position="272"/>
    </location>
</feature>
<feature type="short sequence motif" description="BH2">
    <location>
        <begin position="304"/>
        <end position="319"/>
    </location>
</feature>
<feature type="compositionally biased region" description="Gly residues" evidence="4">
    <location>
        <begin position="50"/>
        <end position="61"/>
    </location>
</feature>
<feature type="compositionally biased region" description="Polar residues" evidence="4">
    <location>
        <begin position="150"/>
        <end position="161"/>
    </location>
</feature>
<feature type="site" description="Cleavage; by caspase-3">
    <location>
        <begin position="127"/>
        <end position="128"/>
    </location>
</feature>
<feature type="site" description="Cleavage; by caspase-3">
    <location>
        <begin position="157"/>
        <end position="158"/>
    </location>
</feature>
<feature type="modified residue" description="Phosphoserine" evidence="9">
    <location>
        <position position="121"/>
    </location>
</feature>
<feature type="modified residue" description="Phosphoserine; by GSK3-alpha and GSK3-beta" evidence="15">
    <location>
        <position position="159"/>
    </location>
</feature>
<feature type="modified residue" description="Phosphoserine" evidence="19">
    <location>
        <position position="162"/>
    </location>
</feature>
<feature type="modified residue" description="Phosphothreonine; by MAPK" evidence="9 13 19">
    <location>
        <position position="163"/>
    </location>
</feature>
<feature type="cross-link" description="Glycyl lysine isopeptide (Lys-Gly) (interchain with G-Cter in ubiquitin)">
    <location>
        <position position="5"/>
    </location>
</feature>
<feature type="cross-link" description="Glycyl lysine isopeptide (Lys-Gly) (interchain with G-Cter in ubiquitin)">
    <location>
        <position position="40"/>
    </location>
</feature>
<feature type="cross-link" description="Glycyl lysine isopeptide (Lys-Gly) (interchain with G-Cter in ubiquitin)">
    <location>
        <position position="136"/>
    </location>
</feature>
<feature type="cross-link" description="Glycyl lysine isopeptide (Lys-Gly) (interchain with G-Cter in ubiquitin)">
    <location>
        <position position="194"/>
    </location>
</feature>
<feature type="cross-link" description="Glycyl lysine isopeptide (Lys-Gly) (interchain with G-Cter in ubiquitin)">
    <location>
        <position position="197"/>
    </location>
</feature>
<feature type="splice variant" id="VSP_000532" description="In isoform 2." evidence="27">
    <original>MLRKLDIKNEDDVKSLSRVMIHVFSDGVTNWGRIVTLISFG</original>
    <variation>WVCGVLPCRGPRRWHQECAAGFCRCCWSRSWFGISNKIALL</variation>
    <location>
        <begin position="231"/>
        <end position="271"/>
    </location>
</feature>
<feature type="splice variant" id="VSP_000533" description="In isoform 2." evidence="27">
    <location>
        <begin position="272"/>
        <end position="350"/>
    </location>
</feature>
<feature type="sequence variant" id="VAR_024021" description="In dbSNP:rs2737820." evidence="6 23">
    <original>E</original>
    <variation>D</variation>
    <location>
        <position position="173"/>
    </location>
</feature>
<feature type="sequence variant" id="VAR_024022" description="In dbSNP:rs11580946." evidence="5 10 26">
    <original>A</original>
    <variation>V</variation>
    <location>
        <position position="227"/>
    </location>
</feature>
<feature type="sequence variant" id="VAR_054157" description="In dbSNP:rs140449444." evidence="17">
    <original>M</original>
    <variation>L</variation>
    <location>
        <position position="231"/>
    </location>
</feature>
<feature type="mutagenesis site" description="Reduced ubiquitination." evidence="14">
    <original>K</original>
    <variation>R</variation>
    <location>
        <position position="5"/>
    </location>
</feature>
<feature type="mutagenesis site" description="Reduced ubiquitination." evidence="14">
    <original>K</original>
    <variation>R</variation>
    <location>
        <position position="40"/>
    </location>
</feature>
<feature type="mutagenesis site" description="Abolishes formation of 28 and 17 kDa cleavage products by CASP3. Abolishes cleavage by caspase-3; when associated with A-157." evidence="12">
    <original>D</original>
    <variation>A</variation>
    <location>
        <position position="127"/>
    </location>
</feature>
<feature type="mutagenesis site" description="Reduced ubiquitination." evidence="14">
    <original>K</original>
    <variation>R</variation>
    <location>
        <position position="136"/>
    </location>
</feature>
<feature type="mutagenesis site" description="Abolishes formation of 23 and 21 kDa cleavage products by CASP3. Abolishes cleavage by caspase-3; when associated with A-127." evidence="12">
    <original>D</original>
    <variation>A</variation>
    <location>
        <position position="157"/>
    </location>
</feature>
<feature type="mutagenesis site" description="Loss of phosphorylation by GSK3 and loss of ubiquitination increasing protein stability." evidence="15">
    <original>S</original>
    <variation>A</variation>
    <location>
        <position position="159"/>
    </location>
</feature>
<feature type="mutagenesis site" description="Abolishes mitochondrial localization and decreases stability." evidence="13 19">
    <original>S</original>
    <variation>A</variation>
    <location>
        <position position="162"/>
    </location>
</feature>
<feature type="mutagenesis site" description="No effect." evidence="13 19">
    <original>S</original>
    <variation>A</variation>
    <location>
        <position position="162"/>
    </location>
</feature>
<feature type="mutagenesis site" description="No effect on mitochondrial localization." evidence="13">
    <original>T</original>
    <variation>A</variation>
    <variation>E</variation>
    <location>
        <position position="163"/>
    </location>
</feature>
<feature type="mutagenesis site" description="Abolishes phosphorylation by MAPK. No effect on phosphorylation induced by okadaic acid or taxol." evidence="13">
    <original>T</original>
    <variation>A</variation>
    <location>
        <position position="163"/>
    </location>
</feature>
<feature type="mutagenesis site" description="Reduced ubiquitination." evidence="14">
    <original>K</original>
    <variation>R</variation>
    <location>
        <position position="194"/>
    </location>
</feature>
<feature type="mutagenesis site" description="Reduced ubiquitination." evidence="14">
    <original>K</original>
    <variation>R</variation>
    <location>
        <position position="197"/>
    </location>
</feature>
<feature type="mutagenesis site" description="No effect on ubiquitination." evidence="14">
    <original>K</original>
    <variation>R</variation>
    <location>
        <position position="208"/>
    </location>
</feature>
<feature type="mutagenesis site" description="No effect on ubiquitination." evidence="14">
    <original>K</original>
    <variation>R</variation>
    <location>
        <position position="234"/>
    </location>
</feature>
<feature type="helix" evidence="32">
    <location>
        <begin position="173"/>
        <end position="191"/>
    </location>
</feature>
<feature type="strand" evidence="30">
    <location>
        <begin position="200"/>
        <end position="202"/>
    </location>
</feature>
<feature type="helix" evidence="32">
    <location>
        <begin position="203"/>
        <end position="223"/>
    </location>
</feature>
<feature type="helix" evidence="32">
    <location>
        <begin position="225"/>
        <end position="235"/>
    </location>
</feature>
<feature type="helix" evidence="32">
    <location>
        <begin position="240"/>
        <end position="244"/>
    </location>
</feature>
<feature type="helix" evidence="32">
    <location>
        <begin position="246"/>
        <end position="253"/>
    </location>
</feature>
<feature type="helix" evidence="29">
    <location>
        <begin position="254"/>
        <end position="256"/>
    </location>
</feature>
<feature type="helix" evidence="32">
    <location>
        <begin position="261"/>
        <end position="280"/>
    </location>
</feature>
<feature type="helix" evidence="32">
    <location>
        <begin position="284"/>
        <end position="286"/>
    </location>
</feature>
<feature type="helix" evidence="32">
    <location>
        <begin position="287"/>
        <end position="308"/>
    </location>
</feature>
<feature type="helix" evidence="32">
    <location>
        <begin position="311"/>
        <end position="319"/>
    </location>
</feature>
<feature type="helix" evidence="31">
    <location>
        <begin position="323"/>
        <end position="325"/>
    </location>
</feature>
<name>MCL1_HUMAN</name>
<accession>Q07820</accession>
<accession>B2R6B2</accession>
<accession>D3DV03</accession>
<accession>D3DV04</accession>
<accession>Q9HD91</accession>
<accession>Q9NRQ3</accession>
<accession>Q9NRQ4</accession>
<accession>Q9UHR7</accession>
<accession>Q9UHR8</accession>
<accession>Q9UHR9</accession>
<accession>Q9UNJ1</accession>
<evidence type="ECO:0000250" key="1">
    <source>
        <dbReference type="UniProtKB" id="P97287"/>
    </source>
</evidence>
<evidence type="ECO:0000250" key="2">
    <source>
        <dbReference type="UniProtKB" id="Q9Z1P3"/>
    </source>
</evidence>
<evidence type="ECO:0000255" key="3"/>
<evidence type="ECO:0000256" key="4">
    <source>
        <dbReference type="SAM" id="MobiDB-lite"/>
    </source>
</evidence>
<evidence type="ECO:0000269" key="5">
    <source>
    </source>
</evidence>
<evidence type="ECO:0000269" key="6">
    <source>
    </source>
</evidence>
<evidence type="ECO:0000269" key="7">
    <source>
    </source>
</evidence>
<evidence type="ECO:0000269" key="8">
    <source>
    </source>
</evidence>
<evidence type="ECO:0000269" key="9">
    <source>
    </source>
</evidence>
<evidence type="ECO:0000269" key="10">
    <source>
    </source>
</evidence>
<evidence type="ECO:0000269" key="11">
    <source>
    </source>
</evidence>
<evidence type="ECO:0000269" key="12">
    <source>
    </source>
</evidence>
<evidence type="ECO:0000269" key="13">
    <source>
    </source>
</evidence>
<evidence type="ECO:0000269" key="14">
    <source>
    </source>
</evidence>
<evidence type="ECO:0000269" key="15">
    <source>
    </source>
</evidence>
<evidence type="ECO:0000269" key="16">
    <source>
    </source>
</evidence>
<evidence type="ECO:0000269" key="17">
    <source>
    </source>
</evidence>
<evidence type="ECO:0000269" key="18">
    <source>
    </source>
</evidence>
<evidence type="ECO:0000269" key="19">
    <source>
    </source>
</evidence>
<evidence type="ECO:0000269" key="20">
    <source>
    </source>
</evidence>
<evidence type="ECO:0000269" key="21">
    <source>
    </source>
</evidence>
<evidence type="ECO:0000269" key="22">
    <source>
    </source>
</evidence>
<evidence type="ECO:0000269" key="23">
    <source>
    </source>
</evidence>
<evidence type="ECO:0000269" key="24">
    <source>
    </source>
</evidence>
<evidence type="ECO:0000269" key="25">
    <source>
    </source>
</evidence>
<evidence type="ECO:0000269" key="26">
    <source ref="8"/>
</evidence>
<evidence type="ECO:0000303" key="27">
    <source>
    </source>
</evidence>
<evidence type="ECO:0000305" key="28"/>
<evidence type="ECO:0007829" key="29">
    <source>
        <dbReference type="PDB" id="5C3F"/>
    </source>
</evidence>
<evidence type="ECO:0007829" key="30">
    <source>
        <dbReference type="PDB" id="6FS1"/>
    </source>
</evidence>
<evidence type="ECO:0007829" key="31">
    <source>
        <dbReference type="PDB" id="6OVC"/>
    </source>
</evidence>
<evidence type="ECO:0007829" key="32">
    <source>
        <dbReference type="PDB" id="6UDV"/>
    </source>
</evidence>
<gene>
    <name type="primary">MCL1</name>
    <name type="synonym">BCL2L3</name>
</gene>
<protein>
    <recommendedName>
        <fullName>Induced myeloid leukemia cell differentiation protein Mcl-1</fullName>
    </recommendedName>
    <alternativeName>
        <fullName>Bcl-2-like protein 3</fullName>
        <shortName>Bcl2-L-3</shortName>
    </alternativeName>
    <alternativeName>
        <fullName>Bcl-2-related protein EAT/mcl1</fullName>
    </alternativeName>
    <alternativeName>
        <fullName>mcl1/EAT</fullName>
    </alternativeName>
</protein>
<proteinExistence type="evidence at protein level"/>
<sequence>MFGLKRNAVIGLNLYCGGAGLGAGSGGATRPGGRLLATEKEASARREIGGGEAGAVIGGSAGASPPSTLTPDSRRVARPPPIGAEVPDVTATPARLLFFAPTRRAAPLEEMEAPAADAIMSPEEELDGYEPEPLGKRPAVLPLLELVGESGNNTSTDGSLPSTPPPAEEEEDELYRQSLEIISRYLREQATGAKDTKPMGRSGATSRKALETLRRVGDGVQRNHETAFQGMLRKLDIKNEDDVKSLSRVMIHVFSDGVTNWGRIVTLISFGAFVAKHLKTINQESCIEPLAESITDVLVRTKRDWLVKQRGWDGFVEFFHVEDLEGGIRNVLLAFAGVAGVGAGLAYLIR</sequence>
<dbReference type="EMBL" id="L08246">
    <property type="status" value="NOT_ANNOTATED_CDS"/>
    <property type="molecule type" value="mRNA"/>
</dbReference>
<dbReference type="EMBL" id="AF118124">
    <property type="protein sequence ID" value="AAD13299.1"/>
    <property type="molecule type" value="mRNA"/>
</dbReference>
<dbReference type="EMBL" id="AF147742">
    <property type="protein sequence ID" value="AAF74821.1"/>
    <property type="molecule type" value="Genomic_DNA"/>
</dbReference>
<dbReference type="EMBL" id="AF198614">
    <property type="protein sequence ID" value="AAF64255.1"/>
    <property type="molecule type" value="Genomic_DNA"/>
</dbReference>
<dbReference type="EMBL" id="AF198614">
    <property type="protein sequence ID" value="AAF64256.1"/>
    <property type="molecule type" value="Genomic_DNA"/>
</dbReference>
<dbReference type="EMBL" id="AF162677">
    <property type="protein sequence ID" value="AAG00896.1"/>
    <property type="molecule type" value="Genomic_DNA"/>
</dbReference>
<dbReference type="EMBL" id="AF162676">
    <property type="protein sequence ID" value="AAG00896.1"/>
    <property type="status" value="JOINED"/>
    <property type="molecule type" value="Genomic_DNA"/>
</dbReference>
<dbReference type="EMBL" id="AF203373">
    <property type="protein sequence ID" value="AAG00904.1"/>
    <property type="molecule type" value="mRNA"/>
</dbReference>
<dbReference type="EMBL" id="BT006640">
    <property type="protein sequence ID" value="AAP35286.1"/>
    <property type="molecule type" value="mRNA"/>
</dbReference>
<dbReference type="EMBL" id="AK312508">
    <property type="protein sequence ID" value="BAG35409.1"/>
    <property type="molecule type" value="mRNA"/>
</dbReference>
<dbReference type="EMBL" id="DQ088966">
    <property type="protein sequence ID" value="AAY68220.1"/>
    <property type="molecule type" value="Genomic_DNA"/>
</dbReference>
<dbReference type="EMBL" id="AL356356">
    <property type="status" value="NOT_ANNOTATED_CDS"/>
    <property type="molecule type" value="Genomic_DNA"/>
</dbReference>
<dbReference type="EMBL" id="CH471121">
    <property type="protein sequence ID" value="EAW53538.1"/>
    <property type="molecule type" value="Genomic_DNA"/>
</dbReference>
<dbReference type="EMBL" id="CH471121">
    <property type="protein sequence ID" value="EAW53539.1"/>
    <property type="molecule type" value="Genomic_DNA"/>
</dbReference>
<dbReference type="EMBL" id="CH471121">
    <property type="protein sequence ID" value="EAW53540.1"/>
    <property type="molecule type" value="Genomic_DNA"/>
</dbReference>
<dbReference type="EMBL" id="CH471121">
    <property type="protein sequence ID" value="EAW53541.1"/>
    <property type="molecule type" value="Genomic_DNA"/>
</dbReference>
<dbReference type="EMBL" id="BC017197">
    <property type="protein sequence ID" value="AAH17197.1"/>
    <property type="molecule type" value="mRNA"/>
</dbReference>
<dbReference type="EMBL" id="BC071897">
    <property type="protein sequence ID" value="AAH71897.1"/>
    <property type="molecule type" value="mRNA"/>
</dbReference>
<dbReference type="EMBL" id="BC107735">
    <property type="protein sequence ID" value="AAI07736.1"/>
    <property type="molecule type" value="mRNA"/>
</dbReference>
<dbReference type="EMBL" id="AF118276">
    <property type="protein sequence ID" value="AAF15309.1"/>
    <property type="molecule type" value="mRNA"/>
</dbReference>
<dbReference type="EMBL" id="AF118277">
    <property type="protein sequence ID" value="AAF15310.1"/>
    <property type="molecule type" value="mRNA"/>
</dbReference>
<dbReference type="EMBL" id="AF118278">
    <property type="protein sequence ID" value="AAF15311.1"/>
    <property type="molecule type" value="mRNA"/>
</dbReference>
<dbReference type="CCDS" id="CCDS956.1">
    <molecule id="Q07820-2"/>
</dbReference>
<dbReference type="CCDS" id="CCDS957.1">
    <molecule id="Q07820-1"/>
</dbReference>
<dbReference type="PIR" id="A47476">
    <property type="entry name" value="A47476"/>
</dbReference>
<dbReference type="RefSeq" id="NP_001184249.1">
    <property type="nucleotide sequence ID" value="NM_001197320.1"/>
</dbReference>
<dbReference type="RefSeq" id="NP_068779.1">
    <molecule id="Q07820-1"/>
    <property type="nucleotide sequence ID" value="NM_021960.5"/>
</dbReference>
<dbReference type="RefSeq" id="NP_877495.1">
    <molecule id="Q07820-2"/>
    <property type="nucleotide sequence ID" value="NM_182763.3"/>
</dbReference>
<dbReference type="PDB" id="2KBW">
    <property type="method" value="NMR"/>
    <property type="chains" value="A=163-326"/>
</dbReference>
<dbReference type="PDB" id="2MHS">
    <property type="method" value="NMR"/>
    <property type="chains" value="A=171-327"/>
</dbReference>
<dbReference type="PDB" id="2NL9">
    <property type="method" value="X-ray"/>
    <property type="resolution" value="1.55 A"/>
    <property type="chains" value="A=209-327"/>
</dbReference>
<dbReference type="PDB" id="2NLA">
    <property type="method" value="X-ray"/>
    <property type="resolution" value="2.80 A"/>
    <property type="chains" value="A=209-327"/>
</dbReference>
<dbReference type="PDB" id="2PQK">
    <property type="method" value="X-ray"/>
    <property type="resolution" value="2.00 A"/>
    <property type="chains" value="A=172-327"/>
</dbReference>
<dbReference type="PDB" id="3D7V">
    <property type="method" value="X-ray"/>
    <property type="resolution" value="2.03 A"/>
    <property type="chains" value="A=209-327"/>
</dbReference>
<dbReference type="PDB" id="3IO9">
    <property type="method" value="X-ray"/>
    <property type="resolution" value="2.40 A"/>
    <property type="chains" value="A=209-327"/>
</dbReference>
<dbReference type="PDB" id="3KJ0">
    <property type="method" value="X-ray"/>
    <property type="resolution" value="1.70 A"/>
    <property type="chains" value="A=172-327"/>
</dbReference>
<dbReference type="PDB" id="3KJ1">
    <property type="method" value="X-ray"/>
    <property type="resolution" value="1.94 A"/>
    <property type="chains" value="A=172-327"/>
</dbReference>
<dbReference type="PDB" id="3KJ2">
    <property type="method" value="X-ray"/>
    <property type="resolution" value="2.35 A"/>
    <property type="chains" value="A=172-327"/>
</dbReference>
<dbReference type="PDB" id="3KZ0">
    <property type="method" value="X-ray"/>
    <property type="resolution" value="2.35 A"/>
    <property type="chains" value="A/B=172-327"/>
</dbReference>
<dbReference type="PDB" id="3MK8">
    <property type="method" value="X-ray"/>
    <property type="resolution" value="2.32 A"/>
    <property type="chains" value="A=172-327, B=208-228"/>
</dbReference>
<dbReference type="PDB" id="3PK1">
    <property type="method" value="X-ray"/>
    <property type="resolution" value="2.49 A"/>
    <property type="chains" value="A/C=174-326"/>
</dbReference>
<dbReference type="PDB" id="3TWU">
    <property type="method" value="X-ray"/>
    <property type="resolution" value="1.80 A"/>
    <property type="chains" value="B=73-88"/>
</dbReference>
<dbReference type="PDB" id="3WIX">
    <property type="method" value="X-ray"/>
    <property type="resolution" value="1.90 A"/>
    <property type="chains" value="A/B/C/D=172-327"/>
</dbReference>
<dbReference type="PDB" id="3WIY">
    <property type="method" value="X-ray"/>
    <property type="resolution" value="2.15 A"/>
    <property type="chains" value="A/B/C/D/E/F=172-327"/>
</dbReference>
<dbReference type="PDB" id="4BPI">
    <property type="method" value="X-ray"/>
    <property type="resolution" value="1.98 A"/>
    <property type="chains" value="A=209-327"/>
</dbReference>
<dbReference type="PDB" id="4BPJ">
    <property type="method" value="X-ray"/>
    <property type="resolution" value="1.60 A"/>
    <property type="chains" value="A=209-327"/>
</dbReference>
<dbReference type="PDB" id="4HW2">
    <property type="method" value="X-ray"/>
    <property type="resolution" value="2.80 A"/>
    <property type="chains" value="A/B/C/D/E/F=172-323"/>
</dbReference>
<dbReference type="PDB" id="4HW3">
    <property type="method" value="X-ray"/>
    <property type="resolution" value="2.40 A"/>
    <property type="chains" value="A/B/C/D/E/F/G/H/I/J/K/L=172-323"/>
</dbReference>
<dbReference type="PDB" id="4HW4">
    <property type="method" value="X-ray"/>
    <property type="resolution" value="1.53 A"/>
    <property type="chains" value="A/B=172-327"/>
</dbReference>
<dbReference type="PDB" id="4OQ5">
    <property type="method" value="X-ray"/>
    <property type="resolution" value="2.86 A"/>
    <property type="chains" value="A/B/C/D/E/F=174-326"/>
</dbReference>
<dbReference type="PDB" id="4OQ6">
    <property type="method" value="X-ray"/>
    <property type="resolution" value="1.81 A"/>
    <property type="chains" value="A/B=174-326"/>
</dbReference>
<dbReference type="PDB" id="4WGI">
    <property type="method" value="X-ray"/>
    <property type="resolution" value="1.85 A"/>
    <property type="chains" value="A=173-321"/>
</dbReference>
<dbReference type="PDB" id="4WMR">
    <property type="method" value="X-ray"/>
    <property type="resolution" value="1.70 A"/>
    <property type="chains" value="A=173-321"/>
</dbReference>
<dbReference type="PDB" id="4WMS">
    <property type="method" value="X-ray"/>
    <property type="resolution" value="1.90 A"/>
    <property type="chains" value="A=174-321"/>
</dbReference>
<dbReference type="PDB" id="4WMT">
    <property type="method" value="X-ray"/>
    <property type="resolution" value="2.35 A"/>
    <property type="chains" value="A=174-321"/>
</dbReference>
<dbReference type="PDB" id="4WMU">
    <property type="method" value="X-ray"/>
    <property type="resolution" value="1.55 A"/>
    <property type="chains" value="A=174-321"/>
</dbReference>
<dbReference type="PDB" id="4WMV">
    <property type="method" value="X-ray"/>
    <property type="resolution" value="2.40 A"/>
    <property type="chains" value="A=174-321"/>
</dbReference>
<dbReference type="PDB" id="4WMW">
    <property type="method" value="X-ray"/>
    <property type="resolution" value="1.90 A"/>
    <property type="chains" value="A=174-321"/>
</dbReference>
<dbReference type="PDB" id="4WMX">
    <property type="method" value="X-ray"/>
    <property type="resolution" value="2.00 A"/>
    <property type="chains" value="A=174-321"/>
</dbReference>
<dbReference type="PDB" id="4ZBF">
    <property type="method" value="X-ray"/>
    <property type="resolution" value="2.20 A"/>
    <property type="chains" value="A/B/C/D/E/F/G/H/I/J/K/L=172-327"/>
</dbReference>
<dbReference type="PDB" id="4ZBI">
    <property type="method" value="X-ray"/>
    <property type="resolution" value="2.50 A"/>
    <property type="chains" value="A/B/C/D/E/F/G/H/I/J/K/L=172-327"/>
</dbReference>
<dbReference type="PDB" id="5C3F">
    <property type="method" value="X-ray"/>
    <property type="resolution" value="1.43 A"/>
    <property type="chains" value="A=173-327"/>
</dbReference>
<dbReference type="PDB" id="5C6H">
    <property type="method" value="X-ray"/>
    <property type="resolution" value="2.05 A"/>
    <property type="chains" value="A/C/E/G/I/K/M/O/Q/S/U/W=171-327"/>
</dbReference>
<dbReference type="PDB" id="5FC4">
    <property type="method" value="X-ray"/>
    <property type="resolution" value="1.50 A"/>
    <property type="chains" value="A=172-320"/>
</dbReference>
<dbReference type="PDB" id="5FDO">
    <property type="method" value="X-ray"/>
    <property type="resolution" value="2.80 A"/>
    <property type="chains" value="A/B/C/D=172-320"/>
</dbReference>
<dbReference type="PDB" id="5FDR">
    <property type="method" value="X-ray"/>
    <property type="resolution" value="2.60 A"/>
    <property type="chains" value="A/B/C/D=172-327"/>
</dbReference>
<dbReference type="PDB" id="5IEZ">
    <property type="method" value="X-ray"/>
    <property type="resolution" value="2.60 A"/>
    <property type="chains" value="A/B/C/D=172-327"/>
</dbReference>
<dbReference type="PDB" id="5IF4">
    <property type="method" value="X-ray"/>
    <property type="resolution" value="2.39 A"/>
    <property type="chains" value="A/B=172-327"/>
</dbReference>
<dbReference type="PDB" id="5JSB">
    <property type="method" value="X-ray"/>
    <property type="resolution" value="2.74 A"/>
    <property type="chains" value="A/C/E/G/I/K=172-350"/>
</dbReference>
<dbReference type="PDB" id="5KU9">
    <property type="method" value="X-ray"/>
    <property type="resolution" value="2.20 A"/>
    <property type="chains" value="A/B=174-219, A/B=258-327"/>
</dbReference>
<dbReference type="PDB" id="5LOF">
    <property type="method" value="X-ray"/>
    <property type="resolution" value="2.20 A"/>
    <property type="chains" value="A=173-321"/>
</dbReference>
<dbReference type="PDB" id="5MES">
    <property type="method" value="X-ray"/>
    <property type="resolution" value="2.24 A"/>
    <property type="chains" value="A=241-327"/>
</dbReference>
<dbReference type="PDB" id="5MEV">
    <property type="method" value="X-ray"/>
    <property type="resolution" value="2.94 A"/>
    <property type="chains" value="A=241-327"/>
</dbReference>
<dbReference type="PDB" id="5UUM">
    <property type="method" value="X-ray"/>
    <property type="resolution" value="2.35 A"/>
    <property type="chains" value="A/B=172-325"/>
</dbReference>
<dbReference type="PDB" id="5VKC">
    <property type="method" value="X-ray"/>
    <property type="resolution" value="2.31 A"/>
    <property type="chains" value="A/B=174-326"/>
</dbReference>
<dbReference type="PDB" id="5VX2">
    <property type="method" value="X-ray"/>
    <property type="resolution" value="1.85 A"/>
    <property type="chains" value="A/C=241-327"/>
</dbReference>
<dbReference type="PDB" id="5W89">
    <property type="method" value="X-ray"/>
    <property type="resolution" value="1.42 A"/>
    <property type="chains" value="A=172-321"/>
</dbReference>
<dbReference type="PDB" id="5W8F">
    <property type="method" value="X-ray"/>
    <property type="resolution" value="1.85 A"/>
    <property type="chains" value="A=172-320"/>
</dbReference>
<dbReference type="PDB" id="6B4L">
    <property type="method" value="X-ray"/>
    <property type="resolution" value="2.25 A"/>
    <property type="chains" value="A/B=174-326"/>
</dbReference>
<dbReference type="PDB" id="6B4U">
    <property type="method" value="X-ray"/>
    <property type="resolution" value="1.95 A"/>
    <property type="chains" value="A=174-326"/>
</dbReference>
<dbReference type="PDB" id="6BW2">
    <property type="method" value="X-ray"/>
    <property type="resolution" value="2.75 A"/>
    <property type="chains" value="A/B/C/D=172-327"/>
</dbReference>
<dbReference type="PDB" id="6BW8">
    <property type="method" value="X-ray"/>
    <property type="resolution" value="2.90 A"/>
    <property type="chains" value="A/B/C/D=172-327"/>
</dbReference>
<dbReference type="PDB" id="6FS0">
    <property type="method" value="X-ray"/>
    <property type="resolution" value="2.25 A"/>
    <property type="chains" value="A=174-324"/>
</dbReference>
<dbReference type="PDB" id="6FS1">
    <property type="method" value="X-ray"/>
    <property type="resolution" value="1.60 A"/>
    <property type="chains" value="A/B=174-321"/>
</dbReference>
<dbReference type="PDB" id="6FS2">
    <property type="method" value="X-ray"/>
    <property type="resolution" value="2.55 A"/>
    <property type="chains" value="A=174-325, B=174-324"/>
</dbReference>
<dbReference type="PDB" id="6MBD">
    <property type="method" value="X-ray"/>
    <property type="resolution" value="1.95 A"/>
    <property type="chains" value="A/B=172-324"/>
</dbReference>
<dbReference type="PDB" id="6MBE">
    <property type="method" value="X-ray"/>
    <property type="resolution" value="2.25 A"/>
    <property type="chains" value="A=172-323"/>
</dbReference>
<dbReference type="PDB" id="6NE5">
    <property type="method" value="X-ray"/>
    <property type="resolution" value="1.85 A"/>
    <property type="chains" value="A/B/C/D=172-328"/>
</dbReference>
<dbReference type="PDB" id="6O4U">
    <property type="method" value="X-ray"/>
    <property type="resolution" value="1.70 A"/>
    <property type="chains" value="A/B=172-327"/>
</dbReference>
<dbReference type="PDB" id="6O6F">
    <property type="method" value="X-ray"/>
    <property type="resolution" value="1.60 A"/>
    <property type="chains" value="A/B=172-327"/>
</dbReference>
<dbReference type="PDB" id="6O6G">
    <property type="method" value="X-ray"/>
    <property type="resolution" value="2.40 A"/>
    <property type="chains" value="A=172-327"/>
</dbReference>
<dbReference type="PDB" id="6OQB">
    <property type="method" value="X-ray"/>
    <property type="resolution" value="1.60 A"/>
    <property type="chains" value="A=171-327"/>
</dbReference>
<dbReference type="PDB" id="6OQC">
    <property type="method" value="X-ray"/>
    <property type="resolution" value="1.80 A"/>
    <property type="chains" value="A/B=171-327"/>
</dbReference>
<dbReference type="PDB" id="6OQD">
    <property type="method" value="X-ray"/>
    <property type="resolution" value="1.48 A"/>
    <property type="chains" value="A=171-327"/>
</dbReference>
<dbReference type="PDB" id="6OQN">
    <property type="method" value="X-ray"/>
    <property type="resolution" value="1.70 A"/>
    <property type="chains" value="A/B=171-327"/>
</dbReference>
<dbReference type="PDB" id="6OVC">
    <property type="method" value="NMR"/>
    <property type="chains" value="A=171-327"/>
</dbReference>
<dbReference type="PDB" id="6P3P">
    <property type="method" value="X-ray"/>
    <property type="resolution" value="1.61 A"/>
    <property type="chains" value="A=172-327"/>
</dbReference>
<dbReference type="PDB" id="6QB3">
    <property type="method" value="X-ray"/>
    <property type="resolution" value="1.90 A"/>
    <property type="chains" value="A=174-327"/>
</dbReference>
<dbReference type="PDB" id="6QB4">
    <property type="method" value="X-ray"/>
    <property type="resolution" value="2.38 A"/>
    <property type="chains" value="A=174-327"/>
</dbReference>
<dbReference type="PDB" id="6QB6">
    <property type="method" value="X-ray"/>
    <property type="resolution" value="2.24 A"/>
    <property type="chains" value="A=174-327"/>
</dbReference>
<dbReference type="PDB" id="6QFC">
    <property type="method" value="X-ray"/>
    <property type="resolution" value="1.96 A"/>
    <property type="chains" value="A=174-327"/>
</dbReference>
<dbReference type="PDB" id="6QFI">
    <property type="method" value="X-ray"/>
    <property type="resolution" value="2.40 A"/>
    <property type="chains" value="A=171-327"/>
</dbReference>
<dbReference type="PDB" id="6QFM">
    <property type="method" value="X-ray"/>
    <property type="resolution" value="2.00 A"/>
    <property type="chains" value="A=171-327"/>
</dbReference>
<dbReference type="PDB" id="6QFQ">
    <property type="method" value="X-ray"/>
    <property type="resolution" value="1.60 A"/>
    <property type="chains" value="A=171-327"/>
</dbReference>
<dbReference type="PDB" id="6QGD">
    <property type="method" value="X-ray"/>
    <property type="resolution" value="1.80 A"/>
    <property type="chains" value="A=173-321"/>
</dbReference>
<dbReference type="PDB" id="6QXJ">
    <property type="method" value="X-ray"/>
    <property type="resolution" value="1.70 A"/>
    <property type="chains" value="A=173-321"/>
</dbReference>
<dbReference type="PDB" id="6QYK">
    <property type="method" value="X-ray"/>
    <property type="resolution" value="2.30 A"/>
    <property type="chains" value="A=173-321"/>
</dbReference>
<dbReference type="PDB" id="6QYL">
    <property type="method" value="X-ray"/>
    <property type="resolution" value="2.20 A"/>
    <property type="chains" value="A=173-321"/>
</dbReference>
<dbReference type="PDB" id="6QYN">
    <property type="method" value="X-ray"/>
    <property type="resolution" value="2.50 A"/>
    <property type="chains" value="A=173-321"/>
</dbReference>
<dbReference type="PDB" id="6QYO">
    <property type="method" value="X-ray"/>
    <property type="resolution" value="2.10 A"/>
    <property type="chains" value="A=173-321"/>
</dbReference>
<dbReference type="PDB" id="6QYP">
    <property type="method" value="X-ray"/>
    <property type="resolution" value="2.20 A"/>
    <property type="chains" value="A=171-327"/>
</dbReference>
<dbReference type="PDB" id="6QZ5">
    <property type="method" value="X-ray"/>
    <property type="resolution" value="2.00 A"/>
    <property type="chains" value="A=171-327"/>
</dbReference>
<dbReference type="PDB" id="6QZ6">
    <property type="method" value="X-ray"/>
    <property type="resolution" value="1.90 A"/>
    <property type="chains" value="A=171-327"/>
</dbReference>
<dbReference type="PDB" id="6QZ7">
    <property type="method" value="X-ray"/>
    <property type="resolution" value="2.20 A"/>
    <property type="chains" value="A=173-321"/>
</dbReference>
<dbReference type="PDB" id="6QZ8">
    <property type="method" value="X-ray"/>
    <property type="resolution" value="2.15 A"/>
    <property type="chains" value="A=171-327"/>
</dbReference>
<dbReference type="PDB" id="6QZB">
    <property type="method" value="X-ray"/>
    <property type="resolution" value="2.00 A"/>
    <property type="chains" value="A=171-327"/>
</dbReference>
<dbReference type="PDB" id="6STJ">
    <property type="method" value="X-ray"/>
    <property type="resolution" value="2.20 A"/>
    <property type="chains" value="A/B/C/D=173-327"/>
</dbReference>
<dbReference type="PDB" id="6U63">
    <property type="method" value="X-ray"/>
    <property type="resolution" value="2.75 A"/>
    <property type="chains" value="A/B/C/D=171-323"/>
</dbReference>
<dbReference type="PDB" id="6U64">
    <property type="method" value="X-ray"/>
    <property type="resolution" value="2.55 A"/>
    <property type="chains" value="A=171-320"/>
</dbReference>
<dbReference type="PDB" id="6U65">
    <property type="method" value="X-ray"/>
    <property type="resolution" value="2.09 A"/>
    <property type="chains" value="A/B/C/D=171-323"/>
</dbReference>
<dbReference type="PDB" id="6U67">
    <property type="method" value="X-ray"/>
    <property type="resolution" value="1.84 A"/>
    <property type="chains" value="A/B=171-323"/>
</dbReference>
<dbReference type="PDB" id="6U6F">
    <property type="method" value="X-ray"/>
    <property type="resolution" value="2.90 A"/>
    <property type="chains" value="A/B/C=171-323"/>
</dbReference>
<dbReference type="PDB" id="6UA3">
    <property type="method" value="X-ray"/>
    <property type="resolution" value="1.55 A"/>
    <property type="chains" value="A=172-325"/>
</dbReference>
<dbReference type="PDB" id="6UAB">
    <property type="method" value="X-ray"/>
    <property type="resolution" value="2.10 A"/>
    <property type="chains" value="A=172-325"/>
</dbReference>
<dbReference type="PDB" id="6UD2">
    <property type="method" value="X-ray"/>
    <property type="resolution" value="1.70 A"/>
    <property type="chains" value="A=171-327"/>
</dbReference>
<dbReference type="PDB" id="6UDI">
    <property type="method" value="X-ray"/>
    <property type="resolution" value="1.94 A"/>
    <property type="chains" value="A=171-327"/>
</dbReference>
<dbReference type="PDB" id="6UDT">
    <property type="method" value="X-ray"/>
    <property type="resolution" value="1.50 A"/>
    <property type="chains" value="A=171-327"/>
</dbReference>
<dbReference type="PDB" id="6UDU">
    <property type="method" value="X-ray"/>
    <property type="resolution" value="1.75 A"/>
    <property type="chains" value="A=171-327"/>
</dbReference>
<dbReference type="PDB" id="6UDV">
    <property type="method" value="X-ray"/>
    <property type="resolution" value="1.35 A"/>
    <property type="chains" value="A=171-327"/>
</dbReference>
<dbReference type="PDB" id="6UDX">
    <property type="method" value="X-ray"/>
    <property type="resolution" value="1.70 A"/>
    <property type="chains" value="A/B=171-327"/>
</dbReference>
<dbReference type="PDB" id="6UDY">
    <property type="method" value="X-ray"/>
    <property type="resolution" value="1.70 A"/>
    <property type="chains" value="A/B=171-327"/>
</dbReference>
<dbReference type="PDB" id="6VBX">
    <property type="method" value="X-ray"/>
    <property type="resolution" value="1.95 A"/>
    <property type="chains" value="A=172-323"/>
</dbReference>
<dbReference type="PDB" id="6YBG">
    <property type="method" value="X-ray"/>
    <property type="resolution" value="2.10 A"/>
    <property type="chains" value="A/B=171-327"/>
</dbReference>
<dbReference type="PDB" id="6YBJ">
    <property type="method" value="X-ray"/>
    <property type="resolution" value="2.50 A"/>
    <property type="chains" value="A=173-321"/>
</dbReference>
<dbReference type="PDB" id="6YBK">
    <property type="method" value="X-ray"/>
    <property type="resolution" value="2.00 A"/>
    <property type="chains" value="A=173-321"/>
</dbReference>
<dbReference type="PDB" id="6YBL">
    <property type="method" value="X-ray"/>
    <property type="resolution" value="2.10 A"/>
    <property type="chains" value="A=173-321"/>
</dbReference>
<dbReference type="PDB" id="6ZIE">
    <property type="method" value="X-ray"/>
    <property type="resolution" value="2.30 A"/>
    <property type="chains" value="B=172-327"/>
</dbReference>
<dbReference type="PDB" id="7NB4">
    <property type="method" value="X-ray"/>
    <property type="resolution" value="1.90 A"/>
    <property type="chains" value="A=171-327"/>
</dbReference>
<dbReference type="PDB" id="7NB7">
    <property type="method" value="X-ray"/>
    <property type="resolution" value="2.82 A"/>
    <property type="chains" value="A/B/C/D=171-327"/>
</dbReference>
<dbReference type="PDB" id="7XGE">
    <property type="method" value="X-ray"/>
    <property type="resolution" value="2.38 A"/>
    <property type="chains" value="B/D/F/H=172-321"/>
</dbReference>
<dbReference type="PDB" id="8AV9">
    <property type="method" value="X-ray"/>
    <property type="resolution" value="1.99 A"/>
    <property type="chains" value="A=174-327"/>
</dbReference>
<dbReference type="PDB" id="8EKX">
    <property type="method" value="X-ray"/>
    <property type="resolution" value="1.55 A"/>
    <property type="chains" value="A=173-321"/>
</dbReference>
<dbReference type="PDB" id="8EL0">
    <property type="method" value="X-ray"/>
    <property type="resolution" value="1.92 A"/>
    <property type="chains" value="A=173-321"/>
</dbReference>
<dbReference type="PDB" id="8EL1">
    <property type="method" value="X-ray"/>
    <property type="resolution" value="2.41 A"/>
    <property type="chains" value="A/B/C/D=173-321"/>
</dbReference>
<dbReference type="PDB" id="8G3S">
    <property type="method" value="X-ray"/>
    <property type="resolution" value="1.40 A"/>
    <property type="chains" value="A=173-321"/>
</dbReference>
<dbReference type="PDB" id="8G3T">
    <property type="method" value="X-ray"/>
    <property type="resolution" value="1.83 A"/>
    <property type="chains" value="A=173-321"/>
</dbReference>
<dbReference type="PDB" id="8G3U">
    <property type="method" value="X-ray"/>
    <property type="resolution" value="1.94 A"/>
    <property type="chains" value="A=173-321"/>
</dbReference>
<dbReference type="PDB" id="8G3W">
    <property type="method" value="X-ray"/>
    <property type="resolution" value="1.78 A"/>
    <property type="chains" value="A=173-321"/>
</dbReference>
<dbReference type="PDB" id="8G3X">
    <property type="method" value="X-ray"/>
    <property type="resolution" value="1.46 A"/>
    <property type="chains" value="A=173-321"/>
</dbReference>
<dbReference type="PDB" id="8G3Y">
    <property type="method" value="X-ray"/>
    <property type="resolution" value="1.70 A"/>
    <property type="chains" value="A=173-321"/>
</dbReference>
<dbReference type="PDB" id="8H7B">
    <property type="method" value="X-ray"/>
    <property type="resolution" value="1.46 A"/>
    <property type="chains" value="A/B=172-322"/>
</dbReference>
<dbReference type="PDB" id="8IQM">
    <property type="method" value="X-ray"/>
    <property type="resolution" value="1.97 A"/>
    <property type="chains" value="A=171-327"/>
</dbReference>
<dbReference type="PDB" id="8QSO">
    <property type="method" value="X-ray"/>
    <property type="resolution" value="2.11 A"/>
    <property type="chains" value="A=173-321"/>
</dbReference>
<dbReference type="PDB" id="8SVY">
    <property type="method" value="X-ray"/>
    <property type="resolution" value="1.47 A"/>
    <property type="chains" value="A=173-321"/>
</dbReference>
<dbReference type="PDB" id="8T6F">
    <property type="method" value="X-ray"/>
    <property type="resolution" value="1.56 A"/>
    <property type="chains" value="A=174-321"/>
</dbReference>
<dbReference type="PDB" id="8VJP">
    <property type="method" value="X-ray"/>
    <property type="resolution" value="1.13 A"/>
    <property type="chains" value="A=172-323"/>
</dbReference>
<dbReference type="PDB" id="8Y1Y">
    <property type="method" value="X-ray"/>
    <property type="resolution" value="2.01 A"/>
    <property type="chains" value="A=171-327"/>
</dbReference>
<dbReference type="PDB" id="8Y1Z">
    <property type="method" value="X-ray"/>
    <property type="resolution" value="1.91 A"/>
    <property type="chains" value="A=171-327"/>
</dbReference>
<dbReference type="PDB" id="8Y20">
    <property type="method" value="X-ray"/>
    <property type="resolution" value="2.23 A"/>
    <property type="chains" value="A=173-321"/>
</dbReference>
<dbReference type="PDB" id="9BCG">
    <property type="method" value="X-ray"/>
    <property type="resolution" value="1.90 A"/>
    <property type="chains" value="A=173-320"/>
</dbReference>
<dbReference type="PDB" id="9CKN">
    <property type="method" value="X-ray"/>
    <property type="resolution" value="1.50 A"/>
    <property type="chains" value="A/B=172-323"/>
</dbReference>
<dbReference type="PDBsum" id="2KBW"/>
<dbReference type="PDBsum" id="2MHS"/>
<dbReference type="PDBsum" id="2NL9"/>
<dbReference type="PDBsum" id="2NLA"/>
<dbReference type="PDBsum" id="2PQK"/>
<dbReference type="PDBsum" id="3D7V"/>
<dbReference type="PDBsum" id="3IO9"/>
<dbReference type="PDBsum" id="3KJ0"/>
<dbReference type="PDBsum" id="3KJ1"/>
<dbReference type="PDBsum" id="3KJ2"/>
<dbReference type="PDBsum" id="3KZ0"/>
<dbReference type="PDBsum" id="3MK8"/>
<dbReference type="PDBsum" id="3PK1"/>
<dbReference type="PDBsum" id="3TWU"/>
<dbReference type="PDBsum" id="3WIX"/>
<dbReference type="PDBsum" id="3WIY"/>
<dbReference type="PDBsum" id="4BPI"/>
<dbReference type="PDBsum" id="4BPJ"/>
<dbReference type="PDBsum" id="4HW2"/>
<dbReference type="PDBsum" id="4HW3"/>
<dbReference type="PDBsum" id="4HW4"/>
<dbReference type="PDBsum" id="4OQ5"/>
<dbReference type="PDBsum" id="4OQ6"/>
<dbReference type="PDBsum" id="4WGI"/>
<dbReference type="PDBsum" id="4WMR"/>
<dbReference type="PDBsum" id="4WMS"/>
<dbReference type="PDBsum" id="4WMT"/>
<dbReference type="PDBsum" id="4WMU"/>
<dbReference type="PDBsum" id="4WMV"/>
<dbReference type="PDBsum" id="4WMW"/>
<dbReference type="PDBsum" id="4WMX"/>
<dbReference type="PDBsum" id="4ZBF"/>
<dbReference type="PDBsum" id="4ZBI"/>
<dbReference type="PDBsum" id="5C3F"/>
<dbReference type="PDBsum" id="5C6H"/>
<dbReference type="PDBsum" id="5FC4"/>
<dbReference type="PDBsum" id="5FDO"/>
<dbReference type="PDBsum" id="5FDR"/>
<dbReference type="PDBsum" id="5IEZ"/>
<dbReference type="PDBsum" id="5IF4"/>
<dbReference type="PDBsum" id="5JSB"/>
<dbReference type="PDBsum" id="5KU9"/>
<dbReference type="PDBsum" id="5LOF"/>
<dbReference type="PDBsum" id="5MES"/>
<dbReference type="PDBsum" id="5MEV"/>
<dbReference type="PDBsum" id="5UUM"/>
<dbReference type="PDBsum" id="5VKC"/>
<dbReference type="PDBsum" id="5VX2"/>
<dbReference type="PDBsum" id="5W89"/>
<dbReference type="PDBsum" id="5W8F"/>
<dbReference type="PDBsum" id="6B4L"/>
<dbReference type="PDBsum" id="6B4U"/>
<dbReference type="PDBsum" id="6BW2"/>
<dbReference type="PDBsum" id="6BW8"/>
<dbReference type="PDBsum" id="6FS0"/>
<dbReference type="PDBsum" id="6FS1"/>
<dbReference type="PDBsum" id="6FS2"/>
<dbReference type="PDBsum" id="6MBD"/>
<dbReference type="PDBsum" id="6MBE"/>
<dbReference type="PDBsum" id="6NE5"/>
<dbReference type="PDBsum" id="6O4U"/>
<dbReference type="PDBsum" id="6O6F"/>
<dbReference type="PDBsum" id="6O6G"/>
<dbReference type="PDBsum" id="6OQB"/>
<dbReference type="PDBsum" id="6OQC"/>
<dbReference type="PDBsum" id="6OQD"/>
<dbReference type="PDBsum" id="6OQN"/>
<dbReference type="PDBsum" id="6OVC"/>
<dbReference type="PDBsum" id="6P3P"/>
<dbReference type="PDBsum" id="6QB3"/>
<dbReference type="PDBsum" id="6QB4"/>
<dbReference type="PDBsum" id="6QB6"/>
<dbReference type="PDBsum" id="6QFC"/>
<dbReference type="PDBsum" id="6QFI"/>
<dbReference type="PDBsum" id="6QFM"/>
<dbReference type="PDBsum" id="6QFQ"/>
<dbReference type="PDBsum" id="6QGD"/>
<dbReference type="PDBsum" id="6QXJ"/>
<dbReference type="PDBsum" id="6QYK"/>
<dbReference type="PDBsum" id="6QYL"/>
<dbReference type="PDBsum" id="6QYN"/>
<dbReference type="PDBsum" id="6QYO"/>
<dbReference type="PDBsum" id="6QYP"/>
<dbReference type="PDBsum" id="6QZ5"/>
<dbReference type="PDBsum" id="6QZ6"/>
<dbReference type="PDBsum" id="6QZ7"/>
<dbReference type="PDBsum" id="6QZ8"/>
<dbReference type="PDBsum" id="6QZB"/>
<dbReference type="PDBsum" id="6STJ"/>
<dbReference type="PDBsum" id="6U63"/>
<dbReference type="PDBsum" id="6U64"/>
<dbReference type="PDBsum" id="6U65"/>
<dbReference type="PDBsum" id="6U67"/>
<dbReference type="PDBsum" id="6U6F"/>
<dbReference type="PDBsum" id="6UA3"/>
<dbReference type="PDBsum" id="6UAB"/>
<dbReference type="PDBsum" id="6UD2"/>
<dbReference type="PDBsum" id="6UDI"/>
<dbReference type="PDBsum" id="6UDT"/>
<dbReference type="PDBsum" id="6UDU"/>
<dbReference type="PDBsum" id="6UDV"/>
<dbReference type="PDBsum" id="6UDX"/>
<dbReference type="PDBsum" id="6UDY"/>
<dbReference type="PDBsum" id="6VBX"/>
<dbReference type="PDBsum" id="6YBG"/>
<dbReference type="PDBsum" id="6YBJ"/>
<dbReference type="PDBsum" id="6YBK"/>
<dbReference type="PDBsum" id="6YBL"/>
<dbReference type="PDBsum" id="6ZIE"/>
<dbReference type="PDBsum" id="7NB4"/>
<dbReference type="PDBsum" id="7NB7"/>
<dbReference type="PDBsum" id="7XGE"/>
<dbReference type="PDBsum" id="8AV9"/>
<dbReference type="PDBsum" id="8EKX"/>
<dbReference type="PDBsum" id="8EL0"/>
<dbReference type="PDBsum" id="8EL1"/>
<dbReference type="PDBsum" id="8G3S"/>
<dbReference type="PDBsum" id="8G3T"/>
<dbReference type="PDBsum" id="8G3U"/>
<dbReference type="PDBsum" id="8G3W"/>
<dbReference type="PDBsum" id="8G3X"/>
<dbReference type="PDBsum" id="8G3Y"/>
<dbReference type="PDBsum" id="8H7B"/>
<dbReference type="PDBsum" id="8IQM"/>
<dbReference type="PDBsum" id="8QSO"/>
<dbReference type="PDBsum" id="8SVY"/>
<dbReference type="PDBsum" id="8T6F"/>
<dbReference type="PDBsum" id="8VJP"/>
<dbReference type="PDBsum" id="8Y1Y"/>
<dbReference type="PDBsum" id="8Y1Z"/>
<dbReference type="PDBsum" id="8Y20"/>
<dbReference type="PDBsum" id="9BCG"/>
<dbReference type="PDBsum" id="9CKN"/>
<dbReference type="SMR" id="Q07820"/>
<dbReference type="BioGRID" id="110338">
    <property type="interactions" value="145"/>
</dbReference>
<dbReference type="ComplexPortal" id="CPX-304">
    <property type="entry name" value="MCL1-PMAIP1 complex"/>
</dbReference>
<dbReference type="ComplexPortal" id="CPX-481">
    <molecule id="Q07820-1"/>
    <property type="entry name" value="MCL-1-BIM complex"/>
</dbReference>
<dbReference type="CORUM" id="Q07820"/>
<dbReference type="DIP" id="DIP-231N"/>
<dbReference type="ELM" id="Q07820"/>
<dbReference type="FunCoup" id="Q07820">
    <property type="interactions" value="1501"/>
</dbReference>
<dbReference type="IntAct" id="Q07820">
    <property type="interactions" value="74"/>
</dbReference>
<dbReference type="MINT" id="Q07820"/>
<dbReference type="STRING" id="9606.ENSP00000358022"/>
<dbReference type="BindingDB" id="Q07820"/>
<dbReference type="ChEMBL" id="CHEMBL4361"/>
<dbReference type="DrugBank" id="DB04813">
    <property type="generic name" value="Bithionol"/>
</dbReference>
<dbReference type="DrugBank" id="DB00619">
    <property type="generic name" value="Imatinib"/>
</dbReference>
<dbReference type="DrugBank" id="DB16770">
    <property type="generic name" value="Morin"/>
</dbReference>
<dbReference type="DrugBank" id="DB17977">
    <property type="generic name" value="Murizatoclax"/>
</dbReference>
<dbReference type="DrugBank" id="DB12191">
    <property type="generic name" value="Obatoclax"/>
</dbReference>
<dbReference type="DrugBank" id="DB16865">
    <property type="generic name" value="Rosmarinic acid"/>
</dbReference>
<dbReference type="DrugBank" id="DB17166">
    <property type="generic name" value="Tapotoclax"/>
</dbReference>
<dbReference type="DrugBank" id="DB17059">
    <property type="generic name" value="TW-37"/>
</dbReference>
<dbReference type="DrugCentral" id="Q07820"/>
<dbReference type="GuidetoPHARMACOLOGY" id="2847"/>
<dbReference type="iPTMnet" id="Q07820"/>
<dbReference type="PhosphoSitePlus" id="Q07820"/>
<dbReference type="BioMuta" id="MCL1"/>
<dbReference type="DMDM" id="83304396"/>
<dbReference type="jPOST" id="Q07820"/>
<dbReference type="MassIVE" id="Q07820"/>
<dbReference type="PaxDb" id="9606-ENSP00000358022"/>
<dbReference type="PeptideAtlas" id="Q07820"/>
<dbReference type="ProteomicsDB" id="58540">
    <molecule id="Q07820-1"/>
</dbReference>
<dbReference type="ProteomicsDB" id="58541">
    <molecule id="Q07820-2"/>
</dbReference>
<dbReference type="Pumba" id="Q07820"/>
<dbReference type="ABCD" id="Q07820">
    <property type="antibodies" value="1 sequenced antibody"/>
</dbReference>
<dbReference type="Antibodypedia" id="1508">
    <property type="antibodies" value="1453 antibodies from 49 providers"/>
</dbReference>
<dbReference type="DNASU" id="4170"/>
<dbReference type="Ensembl" id="ENST00000307940.3">
    <molecule id="Q07820-2"/>
    <property type="protein sequence ID" value="ENSP00000309973.3"/>
    <property type="gene ID" value="ENSG00000143384.14"/>
</dbReference>
<dbReference type="Ensembl" id="ENST00000369026.3">
    <molecule id="Q07820-1"/>
    <property type="protein sequence ID" value="ENSP00000358022.2"/>
    <property type="gene ID" value="ENSG00000143384.14"/>
</dbReference>
<dbReference type="Ensembl" id="ENST00000678770.1">
    <molecule id="Q07820-1"/>
    <property type="protein sequence ID" value="ENSP00000502859.1"/>
    <property type="gene ID" value="ENSG00000143384.14"/>
</dbReference>
<dbReference type="GeneID" id="4170"/>
<dbReference type="KEGG" id="hsa:4170"/>
<dbReference type="MANE-Select" id="ENST00000369026.3">
    <property type="protein sequence ID" value="ENSP00000358022.2"/>
    <property type="RefSeq nucleotide sequence ID" value="NM_021960.5"/>
    <property type="RefSeq protein sequence ID" value="NP_068779.1"/>
</dbReference>
<dbReference type="UCSC" id="uc001euz.4">
    <molecule id="Q07820-1"/>
    <property type="organism name" value="human"/>
</dbReference>
<dbReference type="AGR" id="HGNC:6943"/>
<dbReference type="CTD" id="4170"/>
<dbReference type="DisGeNET" id="4170"/>
<dbReference type="GeneCards" id="MCL1"/>
<dbReference type="HGNC" id="HGNC:6943">
    <property type="gene designation" value="MCL1"/>
</dbReference>
<dbReference type="HPA" id="ENSG00000143384">
    <property type="expression patterns" value="Tissue enhanced (bone)"/>
</dbReference>
<dbReference type="MalaCards" id="MCL1"/>
<dbReference type="MIM" id="159552">
    <property type="type" value="gene"/>
</dbReference>
<dbReference type="neXtProt" id="NX_Q07820"/>
<dbReference type="OpenTargets" id="ENSG00000143384"/>
<dbReference type="PharmGKB" id="PA30688"/>
<dbReference type="VEuPathDB" id="HostDB:ENSG00000143384"/>
<dbReference type="eggNOG" id="KOG4728">
    <property type="taxonomic scope" value="Eukaryota"/>
</dbReference>
<dbReference type="GeneTree" id="ENSGT01130000278292"/>
<dbReference type="HOGENOM" id="CLU_046711_0_0_1"/>
<dbReference type="InParanoid" id="Q07820"/>
<dbReference type="OMA" id="FFAPTRC"/>
<dbReference type="OrthoDB" id="8932147at2759"/>
<dbReference type="PAN-GO" id="Q07820">
    <property type="GO annotations" value="6 GO annotations based on evolutionary models"/>
</dbReference>
<dbReference type="PhylomeDB" id="Q07820"/>
<dbReference type="TreeFam" id="TF315834"/>
<dbReference type="PathwayCommons" id="Q07820"/>
<dbReference type="Reactome" id="R-HSA-6785807">
    <property type="pathway name" value="Interleukin-4 and Interleukin-13 signaling"/>
</dbReference>
<dbReference type="Reactome" id="R-HSA-9725370">
    <property type="pathway name" value="Signaling by ALK fusions and activated point mutants"/>
</dbReference>
<dbReference type="SignaLink" id="Q07820"/>
<dbReference type="SIGNOR" id="Q07820"/>
<dbReference type="BioGRID-ORCS" id="4170">
    <property type="hits" value="304 hits in 1183 CRISPR screens"/>
</dbReference>
<dbReference type="ChiTaRS" id="MCL1">
    <property type="organism name" value="human"/>
</dbReference>
<dbReference type="EvolutionaryTrace" id="Q07820"/>
<dbReference type="GeneWiki" id="MCL1"/>
<dbReference type="GenomeRNAi" id="4170"/>
<dbReference type="Pharos" id="Q07820">
    <property type="development level" value="Tchem"/>
</dbReference>
<dbReference type="PRO" id="PR:Q07820"/>
<dbReference type="Proteomes" id="UP000005640">
    <property type="component" value="Chromosome 1"/>
</dbReference>
<dbReference type="RNAct" id="Q07820">
    <property type="molecule type" value="protein"/>
</dbReference>
<dbReference type="Bgee" id="ENSG00000143384">
    <property type="expression patterns" value="Expressed in visceral pleura and 213 other cell types or tissues"/>
</dbReference>
<dbReference type="ExpressionAtlas" id="Q07820">
    <property type="expression patterns" value="baseline and differential"/>
</dbReference>
<dbReference type="GO" id="GO:0097136">
    <property type="term" value="C:Bcl-2 family protein complex"/>
    <property type="evidence" value="ECO:0000314"/>
    <property type="project" value="UniProtKB"/>
</dbReference>
<dbReference type="GO" id="GO:0005737">
    <property type="term" value="C:cytoplasm"/>
    <property type="evidence" value="ECO:0000304"/>
    <property type="project" value="UniProtKB"/>
</dbReference>
<dbReference type="GO" id="GO:0005829">
    <property type="term" value="C:cytosol"/>
    <property type="evidence" value="ECO:0000250"/>
    <property type="project" value="UniProtKB"/>
</dbReference>
<dbReference type="GO" id="GO:0016020">
    <property type="term" value="C:membrane"/>
    <property type="evidence" value="ECO:0000314"/>
    <property type="project" value="MGI"/>
</dbReference>
<dbReference type="GO" id="GO:0005741">
    <property type="term" value="C:mitochondrial outer membrane"/>
    <property type="evidence" value="ECO:0000318"/>
    <property type="project" value="GO_Central"/>
</dbReference>
<dbReference type="GO" id="GO:0005739">
    <property type="term" value="C:mitochondrion"/>
    <property type="evidence" value="ECO:0000314"/>
    <property type="project" value="HPA"/>
</dbReference>
<dbReference type="GO" id="GO:0005654">
    <property type="term" value="C:nucleoplasm"/>
    <property type="evidence" value="ECO:0007669"/>
    <property type="project" value="UniProtKB-SubCell"/>
</dbReference>
<dbReference type="GO" id="GO:0005634">
    <property type="term" value="C:nucleus"/>
    <property type="evidence" value="ECO:0000314"/>
    <property type="project" value="MGI"/>
</dbReference>
<dbReference type="GO" id="GO:0051434">
    <property type="term" value="F:BH3 domain binding"/>
    <property type="evidence" value="ECO:0000353"/>
    <property type="project" value="BHF-UCL"/>
</dbReference>
<dbReference type="GO" id="GO:0015267">
    <property type="term" value="F:channel activity"/>
    <property type="evidence" value="ECO:0000318"/>
    <property type="project" value="GO_Central"/>
</dbReference>
<dbReference type="GO" id="GO:0046982">
    <property type="term" value="F:protein heterodimerization activity"/>
    <property type="evidence" value="ECO:0000353"/>
    <property type="project" value="UniProtKB"/>
</dbReference>
<dbReference type="GO" id="GO:0008320">
    <property type="term" value="F:protein transmembrane transporter activity"/>
    <property type="evidence" value="ECO:0000304"/>
    <property type="project" value="UniProtKB"/>
</dbReference>
<dbReference type="GO" id="GO:0001709">
    <property type="term" value="P:cell fate determination"/>
    <property type="evidence" value="ECO:0000303"/>
    <property type="project" value="UniProtKB"/>
</dbReference>
<dbReference type="GO" id="GO:0019725">
    <property type="term" value="P:cellular homeostasis"/>
    <property type="evidence" value="ECO:0000303"/>
    <property type="project" value="UniProtKB"/>
</dbReference>
<dbReference type="GO" id="GO:0006974">
    <property type="term" value="P:DNA damage response"/>
    <property type="evidence" value="ECO:0000315"/>
    <property type="project" value="MGI"/>
</dbReference>
<dbReference type="GO" id="GO:0097192">
    <property type="term" value="P:extrinsic apoptotic signaling pathway in absence of ligand"/>
    <property type="evidence" value="ECO:0000315"/>
    <property type="project" value="UniProtKB"/>
</dbReference>
<dbReference type="GO" id="GO:0008630">
    <property type="term" value="P:intrinsic apoptotic signaling pathway in response to DNA damage"/>
    <property type="evidence" value="ECO:0000318"/>
    <property type="project" value="GO_Central"/>
</dbReference>
<dbReference type="GO" id="GO:0008053">
    <property type="term" value="P:mitochondrial fusion"/>
    <property type="evidence" value="ECO:0000318"/>
    <property type="project" value="GO_Central"/>
</dbReference>
<dbReference type="GO" id="GO:2000811">
    <property type="term" value="P:negative regulation of anoikis"/>
    <property type="evidence" value="ECO:0000315"/>
    <property type="project" value="UniProtKB"/>
</dbReference>
<dbReference type="GO" id="GO:0043066">
    <property type="term" value="P:negative regulation of apoptotic process"/>
    <property type="evidence" value="ECO:0000314"/>
    <property type="project" value="BHF-UCL"/>
</dbReference>
<dbReference type="GO" id="GO:0010507">
    <property type="term" value="P:negative regulation of autophagy"/>
    <property type="evidence" value="ECO:0000315"/>
    <property type="project" value="UniProtKB"/>
</dbReference>
<dbReference type="GO" id="GO:2001240">
    <property type="term" value="P:negative regulation of extrinsic apoptotic signaling pathway in absence of ligand"/>
    <property type="evidence" value="ECO:0000315"/>
    <property type="project" value="UniProtKB"/>
</dbReference>
<dbReference type="GO" id="GO:0043065">
    <property type="term" value="P:positive regulation of apoptotic process"/>
    <property type="evidence" value="ECO:0000314"/>
    <property type="project" value="ComplexPortal"/>
</dbReference>
<dbReference type="GO" id="GO:0043525">
    <property type="term" value="P:positive regulation of neuron apoptotic process"/>
    <property type="evidence" value="ECO:0000318"/>
    <property type="project" value="GO_Central"/>
</dbReference>
<dbReference type="GO" id="GO:1903378">
    <property type="term" value="P:positive regulation of oxidative stress-induced neuron intrinsic apoptotic signaling pathway"/>
    <property type="evidence" value="ECO:0000316"/>
    <property type="project" value="ParkinsonsUK-UCL"/>
</dbReference>
<dbReference type="GO" id="GO:0042981">
    <property type="term" value="P:regulation of apoptotic process"/>
    <property type="evidence" value="ECO:0000314"/>
    <property type="project" value="ComplexPortal"/>
</dbReference>
<dbReference type="GO" id="GO:0001836">
    <property type="term" value="P:release of cytochrome c from mitochondria"/>
    <property type="evidence" value="ECO:0000318"/>
    <property type="project" value="GO_Central"/>
</dbReference>
<dbReference type="GO" id="GO:0034097">
    <property type="term" value="P:response to cytokine"/>
    <property type="evidence" value="ECO:0000314"/>
    <property type="project" value="MGI"/>
</dbReference>
<dbReference type="CDD" id="cd06845">
    <property type="entry name" value="Bcl-2_like"/>
    <property type="match status" value="1"/>
</dbReference>
<dbReference type="FunFam" id="1.10.437.10:FF:000002">
    <property type="entry name" value="Induced myeloid leukemia cell differentiation protein Mcl-1"/>
    <property type="match status" value="1"/>
</dbReference>
<dbReference type="Gene3D" id="1.10.437.10">
    <property type="entry name" value="Blc2-like"/>
    <property type="match status" value="1"/>
</dbReference>
<dbReference type="InterPro" id="IPR013281">
    <property type="entry name" value="Apop_reg_Mc1"/>
</dbReference>
<dbReference type="InterPro" id="IPR036834">
    <property type="entry name" value="Bcl-2-like_sf"/>
</dbReference>
<dbReference type="InterPro" id="IPR046371">
    <property type="entry name" value="Bcl-2_BH1-3"/>
</dbReference>
<dbReference type="InterPro" id="IPR026298">
    <property type="entry name" value="Bcl-2_fam"/>
</dbReference>
<dbReference type="InterPro" id="IPR002475">
    <property type="entry name" value="Bcl2-like"/>
</dbReference>
<dbReference type="InterPro" id="IPR020717">
    <property type="entry name" value="Bcl2_BH1_motif_CS"/>
</dbReference>
<dbReference type="InterPro" id="IPR020726">
    <property type="entry name" value="Bcl2_BH2_motif_CS"/>
</dbReference>
<dbReference type="InterPro" id="IPR020728">
    <property type="entry name" value="Bcl2_BH3_motif_CS"/>
</dbReference>
<dbReference type="PANTHER" id="PTHR11256">
    <property type="entry name" value="BCL-2 RELATED"/>
    <property type="match status" value="1"/>
</dbReference>
<dbReference type="PANTHER" id="PTHR11256:SF46">
    <property type="entry name" value="INDUCED MYELOID LEUKEMIA CELL DIFFERENTIATION PROTEIN MCL-1"/>
    <property type="match status" value="1"/>
</dbReference>
<dbReference type="Pfam" id="PF00452">
    <property type="entry name" value="Bcl-2"/>
    <property type="match status" value="1"/>
</dbReference>
<dbReference type="PRINTS" id="PR01866">
    <property type="entry name" value="APOPREGMCL1"/>
</dbReference>
<dbReference type="PRINTS" id="PR01862">
    <property type="entry name" value="BCL2FAMILY"/>
</dbReference>
<dbReference type="SMART" id="SM00337">
    <property type="entry name" value="BCL"/>
    <property type="match status" value="1"/>
</dbReference>
<dbReference type="SUPFAM" id="SSF56854">
    <property type="entry name" value="Bcl-2 inhibitors of programmed cell death"/>
    <property type="match status" value="1"/>
</dbReference>
<dbReference type="PROSITE" id="PS50062">
    <property type="entry name" value="BCL2_FAMILY"/>
    <property type="match status" value="1"/>
</dbReference>
<dbReference type="PROSITE" id="PS01080">
    <property type="entry name" value="BH1"/>
    <property type="match status" value="1"/>
</dbReference>
<dbReference type="PROSITE" id="PS01258">
    <property type="entry name" value="BH2"/>
    <property type="match status" value="1"/>
</dbReference>
<dbReference type="PROSITE" id="PS01259">
    <property type="entry name" value="BH3"/>
    <property type="match status" value="1"/>
</dbReference>
<comment type="function">
    <text evidence="6 15">Involved in the regulation of apoptosis versus cell survival, and in the maintenance of viability but not of proliferation. Mediates its effects by interactions with a number of other regulators of apoptosis. Isoform 1 inhibits apoptosis. Isoform 2 promotes apoptosis.</text>
</comment>
<comment type="subunit">
    <text evidence="1 2 7 8 11 16 18 20 21">Interacts with HIF3A (via C-terminus domain) (By similarity). Interacts with BAD, BOK, BIK and BMF (By similarity). Interacts with PMAIP1 (PubMed:17389404). Interacts with BBC3 (By similarity). Isoform 1 interacts with BAX, BAK1 and TPT1 (PubMed:10837489, PubMed:12149273, PubMed:15077116). Heterodimer of isoform 1 and isoform 2. Homodimers of isoform 1 or isoform 2 are not detected. Isoform 2 does not interact with pro-apoptotic BCL2-related proteins (PubMed:10837489). Interacts with RTL10/BOP (PubMed:23055042). Interacts with BCL2L11; may sequester BCL2L11 to prevent its pro-apoptotic activity (PubMed:10837489, PubMed:17389404, PubMed:20562877, PubMed:27013495). Interacts with GIMAP5 and HSPA8/HSC70; the interaction between HSPA8 and MCL1 is impaired in the absence of GIMAP5 (By similarity).</text>
</comment>
<comment type="interaction">
    <interactant intactId="EBI-1003422">
        <id>Q07820</id>
    </interactant>
    <interactant intactId="EBI-519866">
        <id>Q16611</id>
        <label>BAK1</label>
    </interactant>
    <organismsDiffer>false</organismsDiffer>
    <experiments>19</experiments>
</comment>
<comment type="interaction">
    <interactant intactId="EBI-1003422">
        <id>Q07820</id>
    </interactant>
    <interactant intactId="EBI-516580">
        <id>Q07812</id>
        <label>BAX</label>
    </interactant>
    <organismsDiffer>false</organismsDiffer>
    <experiments>10</experiments>
</comment>
<comment type="interaction">
    <interactant intactId="EBI-1003422">
        <id>Q07820</id>
    </interactant>
    <interactant intactId="EBI-519884">
        <id>Q9BXH1</id>
        <label>BBC3</label>
    </interactant>
    <organismsDiffer>false</organismsDiffer>
    <experiments>5</experiments>
</comment>
<comment type="interaction">
    <interactant intactId="EBI-1003422">
        <id>Q07820</id>
    </interactant>
    <interactant intactId="EBI-519896">
        <id>Q9BXH1-2</id>
        <label>BBC3</label>
    </interactant>
    <organismsDiffer>false</organismsDiffer>
    <experiments>2</experiments>
</comment>
<comment type="interaction">
    <interactant intactId="EBI-1003422">
        <id>Q07820</id>
    </interactant>
    <interactant intactId="EBI-526406">
        <id>O43521</id>
        <label>BCL2L11</label>
    </interactant>
    <organismsDiffer>false</organismsDiffer>
    <experiments>18</experiments>
</comment>
<comment type="interaction">
    <interactant intactId="EBI-1003422">
        <id>Q07820</id>
    </interactant>
    <interactant intactId="EBI-949378">
        <id>Q14457</id>
        <label>BECN1</label>
    </interactant>
    <organismsDiffer>false</organismsDiffer>
    <experiments>2</experiments>
</comment>
<comment type="interaction">
    <interactant intactId="EBI-1003422">
        <id>Q07820</id>
    </interactant>
    <interactant intactId="EBI-519672">
        <id>P55957</id>
        <label>BID</label>
    </interactant>
    <organismsDiffer>false</organismsDiffer>
    <experiments>3</experiments>
</comment>
<comment type="interaction">
    <interactant intactId="EBI-1003422">
        <id>Q07820</id>
    </interactant>
    <interactant intactId="EBI-3919268">
        <id>Q96LC9</id>
        <label>BMF</label>
    </interactant>
    <organismsDiffer>false</organismsDiffer>
    <experiments>3</experiments>
</comment>
<comment type="interaction">
    <interactant intactId="EBI-1003422">
        <id>Q07820</id>
    </interactant>
    <interactant intactId="EBI-603614">
        <id>Q03135</id>
        <label>CAV1</label>
    </interactant>
    <organismsDiffer>false</organismsDiffer>
    <experiments>3</experiments>
</comment>
<comment type="interaction">
    <interactant intactId="EBI-1003422">
        <id>Q07820</id>
    </interactant>
    <interactant intactId="EBI-625934">
        <id>Q7Z6Z7</id>
        <label>HUWE1</label>
    </interactant>
    <organismsDiffer>false</organismsDiffer>
    <experiments>7</experiments>
</comment>
<comment type="interaction">
    <interactant intactId="EBI-1003422">
        <id>Q07820</id>
    </interactant>
    <interactant intactId="EBI-6918743">
        <id>Q9H3M0</id>
        <label>KCNF1</label>
    </interactant>
    <organismsDiffer>false</organismsDiffer>
    <experiments>3</experiments>
</comment>
<comment type="interaction">
    <interactant intactId="EBI-1003422">
        <id>Q07820</id>
    </interactant>
    <interactant intactId="EBI-707392">
        <id>Q13794</id>
        <label>PMAIP1</label>
    </interactant>
    <organismsDiffer>false</organismsDiffer>
    <experiments>6</experiments>
</comment>
<comment type="interaction">
    <interactant intactId="EBI-1003422">
        <id>Q07820</id>
    </interactant>
    <interactant intactId="EBI-10697720">
        <id>Q7L3V2</id>
        <label>RTL10</label>
    </interactant>
    <organismsDiffer>false</organismsDiffer>
    <experiments>2</experiments>
</comment>
<comment type="interaction">
    <interactant intactId="EBI-1003422">
        <id>Q07820</id>
    </interactant>
    <interactant intactId="EBI-727240">
        <id>Q9UNK0</id>
        <label>STX8</label>
    </interactant>
    <organismsDiffer>false</organismsDiffer>
    <experiments>3</experiments>
</comment>
<comment type="interaction">
    <interactant intactId="EBI-1003422">
        <id>Q07820</id>
    </interactant>
    <interactant intactId="EBI-302524">
        <id>Q93008</id>
        <label>USP9X</label>
    </interactant>
    <organismsDiffer>false</organismsDiffer>
    <experiments>10</experiments>
</comment>
<comment type="interaction">
    <interactant intactId="EBI-1003422">
        <id>Q07820</id>
    </interactant>
    <interactant intactId="EBI-1161338">
        <id>P49817</id>
        <label>Cav1</label>
    </interactant>
    <organismsDiffer>true</organismsDiffer>
    <experiments>3</experiments>
</comment>
<comment type="interaction">
    <interactant intactId="EBI-1003422">
        <id>Q07820</id>
    </interactant>
    <interactant intactId="EBI-709183">
        <id>Q9JM54</id>
        <label>Pmaip1</label>
    </interactant>
    <organismsDiffer>true</organismsDiffer>
    <experiments>2</experiments>
</comment>
<comment type="interaction">
    <interactant intactId="EBI-1003422">
        <id>Q07820</id>
    </interactant>
    <interactant intactId="EBI-9657017">
        <id>Q91AU0</id>
    </interactant>
    <organismsDiffer>true</organismsDiffer>
    <experiments>2</experiments>
</comment>
<comment type="interaction">
    <interactant intactId="EBI-7173045">
        <id>Q07820-1</id>
    </interactant>
    <interactant intactId="EBI-1003451">
        <id>Q07820-2</id>
        <label>MCL1</label>
    </interactant>
    <organismsDiffer>false</organismsDiffer>
    <experiments>4</experiments>
</comment>
<comment type="subcellular location">
    <subcellularLocation>
        <location evidence="28">Membrane</location>
        <topology evidence="28">Single-pass membrane protein</topology>
    </subcellularLocation>
    <subcellularLocation>
        <location>Cytoplasm</location>
    </subcellularLocation>
    <subcellularLocation>
        <location>Mitochondrion</location>
    </subcellularLocation>
    <subcellularLocation>
        <location>Nucleus</location>
        <location>Nucleoplasm</location>
    </subcellularLocation>
    <text>Cytoplasmic, associated with mitochondria.</text>
</comment>
<comment type="alternative products">
    <event type="alternative splicing"/>
    <isoform>
        <id>Q07820-1</id>
        <name>1</name>
        <name>MCL1L</name>
        <name>MCL-1L</name>
        <sequence type="displayed"/>
    </isoform>
    <isoform>
        <id>Q07820-2</id>
        <name>2</name>
        <name>Delta S</name>
        <name>MCL-1S</name>
        <name>TM</name>
        <sequence type="described" ref="VSP_000532 VSP_000533"/>
    </isoform>
</comment>
<comment type="induction">
    <text evidence="24 25">Expression increases early during phorbol ester-induced differentiation along the monocyte/macrophage pathway in myeloid leukemia cell line ML-1. Rapidly up-regulated by CSF2 in ML-1 cells. Up-regulated by heat shock-induced differentiation. Expression increases early during retinoic acid-induced differentiation.</text>
</comment>
<comment type="PTM">
    <text>Cleaved by CASP3 during apoptosis. In intact cells cleavage occurs preferentially after Asp-127, yielding a pro-apoptotic 28 kDa C-terminal fragment.</text>
</comment>
<comment type="PTM">
    <text evidence="9 13 19">Rapidly degraded in the absence of phosphorylation on Thr-163 in the PEST region.</text>
</comment>
<comment type="PTM">
    <text evidence="15">Phosphorylated on Ser-159, by GSK3, in response to IL3/interleukin-3 withdrawal. Phosphorylation at Ser-159 induces ubiquitination and proteasomal degradation, abrogating the anti-apoptotic activity. Treatment with taxol or okadaic acid induces phosphorylation on additional sites.</text>
</comment>
<comment type="PTM">
    <text evidence="15 22">Ubiquitinated. Ubiquitination is induced by phosphorylation at Ser-159 (PubMed:16543145). Deubiquitinated by USP20; leading to increased stability (PubMed:35063767).</text>
</comment>
<comment type="similarity">
    <text evidence="28">Belongs to the Bcl-2 family.</text>
</comment>
<keyword id="KW-0002">3D-structure</keyword>
<keyword id="KW-0025">Alternative splicing</keyword>
<keyword id="KW-0053">Apoptosis</keyword>
<keyword id="KW-0963">Cytoplasm</keyword>
<keyword id="KW-0217">Developmental protein</keyword>
<keyword id="KW-0221">Differentiation</keyword>
<keyword id="KW-0903">Direct protein sequencing</keyword>
<keyword id="KW-1017">Isopeptide bond</keyword>
<keyword id="KW-0472">Membrane</keyword>
<keyword id="KW-0496">Mitochondrion</keyword>
<keyword id="KW-0539">Nucleus</keyword>
<keyword id="KW-0597">Phosphoprotein</keyword>
<keyword id="KW-1267">Proteomics identification</keyword>
<keyword id="KW-1185">Reference proteome</keyword>
<keyword id="KW-0812">Transmembrane</keyword>
<keyword id="KW-1133">Transmembrane helix</keyword>
<keyword id="KW-0832">Ubl conjugation</keyword>
<organism>
    <name type="scientific">Homo sapiens</name>
    <name type="common">Human</name>
    <dbReference type="NCBI Taxonomy" id="9606"/>
    <lineage>
        <taxon>Eukaryota</taxon>
        <taxon>Metazoa</taxon>
        <taxon>Chordata</taxon>
        <taxon>Craniata</taxon>
        <taxon>Vertebrata</taxon>
        <taxon>Euteleostomi</taxon>
        <taxon>Mammalia</taxon>
        <taxon>Eutheria</taxon>
        <taxon>Euarchontoglires</taxon>
        <taxon>Primates</taxon>
        <taxon>Haplorrhini</taxon>
        <taxon>Catarrhini</taxon>
        <taxon>Hominidae</taxon>
        <taxon>Homo</taxon>
    </lineage>
</organism>
<reference key="1">
    <citation type="journal article" date="1993" name="Proc. Natl. Acad. Sci. U.S.A.">
        <title>MCL1, a gene expressed in programmed myeloid cell differentiation, has sequence similarity to BCL2.</title>
        <authorList>
            <person name="Kozopas K.M."/>
            <person name="Yang T."/>
            <person name="Buchan H.L."/>
            <person name="Zhou P."/>
            <person name="Craig R.W."/>
        </authorList>
    </citation>
    <scope>NUCLEOTIDE SEQUENCE [MRNA] (ISOFORM 1)</scope>
    <scope>VARIANT ASP-173</scope>
    <source>
        <tissue>Myeloid leukemia cell</tissue>
    </source>
</reference>
<reference key="2">
    <citation type="journal article" date="1996" name="Cell Struct. Funct.">
        <title>Induction of mcl1/EAT, Bcl-2 related gene, by retinoic acid or heat shock in the human embryonal carcinoma cells, NCR-G3.</title>
        <authorList>
            <person name="Umezawa A."/>
            <person name="Maruyama T."/>
            <person name="Inazawa J."/>
            <person name="Imai S."/>
            <person name="Takano T."/>
            <person name="Hata J."/>
        </authorList>
    </citation>
    <scope>NUCLEOTIDE SEQUENCE [MRNA] (ISOFORM 1)</scope>
    <scope>INDUCTION</scope>
</reference>
<reference key="3">
    <citation type="journal article" date="2000" name="Cell. Mol. Life Sci.">
        <title>Functional analysis of the human MCL-1 gene.</title>
        <authorList>
            <person name="Akgul C."/>
            <person name="Turner P.C."/>
            <person name="White M.R.H."/>
            <person name="Edwards S.W."/>
        </authorList>
    </citation>
    <scope>NUCLEOTIDE SEQUENCE [MRNA] (ISOFORM 1)</scope>
</reference>
<reference key="4">
    <citation type="journal article" date="2000" name="J. Biol. Chem.">
        <title>Exon skipping in Mcl-1 results in a Bcl-2 homology domain 3 only gene product that promotes cell death.</title>
        <authorList>
            <person name="Bingle C.D."/>
            <person name="Craig R.W."/>
            <person name="Swales B.M."/>
            <person name="Singleton V."/>
            <person name="Zhou P."/>
            <person name="Whyte M.K.B."/>
        </authorList>
    </citation>
    <scope>NUCLEOTIDE SEQUENCE [GENOMIC DNA] (ISOFORMS 1 AND 2)</scope>
    <scope>VARIANT ASP-173</scope>
    <scope>FUNCTION</scope>
    <source>
        <tissue>Myeloid leukemia cell</tissue>
        <tissue>Neuroblastoma</tissue>
    </source>
</reference>
<reference key="5">
    <citation type="journal article" date="2000" name="J. Biol. Chem.">
        <title>MCL-1S, a splicing variant of the antiapoptotic BCL-2 family member MCL-1, encodes a proapoptotic protein possessing only the BH3 domain.</title>
        <authorList>
            <person name="Bae J."/>
            <person name="Leo C.P."/>
            <person name="Hsu S.Y."/>
            <person name="Hsueh A.J.W."/>
        </authorList>
    </citation>
    <scope>NUCLEOTIDE SEQUENCE [MRNA] (ISOFORMS 1 AND 2)</scope>
    <scope>INTERACTION WITH BAX; BAK1 AND BCL2L11</scope>
    <scope>DIMERIZATION OF ISOFORMS 1 AND 2</scope>
</reference>
<reference key="6">
    <citation type="submission" date="2003-05" db="EMBL/GenBank/DDBJ databases">
        <title>Cloning of human full-length CDSs in BD Creator(TM) system donor vector.</title>
        <authorList>
            <person name="Kalnine N."/>
            <person name="Chen X."/>
            <person name="Rolfs A."/>
            <person name="Halleck A."/>
            <person name="Hines L."/>
            <person name="Eisenstein S."/>
            <person name="Koundinya M."/>
            <person name="Raphael J."/>
            <person name="Moreira D."/>
            <person name="Kelley T."/>
            <person name="LaBaer J."/>
            <person name="Lin Y."/>
            <person name="Phelan M."/>
            <person name="Farmer A."/>
        </authorList>
    </citation>
    <scope>NUCLEOTIDE SEQUENCE [LARGE SCALE MRNA] (ISOFORM 1)</scope>
</reference>
<reference key="7">
    <citation type="journal article" date="2004" name="Nat. Genet.">
        <title>Complete sequencing and characterization of 21,243 full-length human cDNAs.</title>
        <authorList>
            <person name="Ota T."/>
            <person name="Suzuki Y."/>
            <person name="Nishikawa T."/>
            <person name="Otsuki T."/>
            <person name="Sugiyama T."/>
            <person name="Irie R."/>
            <person name="Wakamatsu A."/>
            <person name="Hayashi K."/>
            <person name="Sato H."/>
            <person name="Nagai K."/>
            <person name="Kimura K."/>
            <person name="Makita H."/>
            <person name="Sekine M."/>
            <person name="Obayashi M."/>
            <person name="Nishi T."/>
            <person name="Shibahara T."/>
            <person name="Tanaka T."/>
            <person name="Ishii S."/>
            <person name="Yamamoto J."/>
            <person name="Saito K."/>
            <person name="Kawai Y."/>
            <person name="Isono Y."/>
            <person name="Nakamura Y."/>
            <person name="Nagahari K."/>
            <person name="Murakami K."/>
            <person name="Yasuda T."/>
            <person name="Iwayanagi T."/>
            <person name="Wagatsuma M."/>
            <person name="Shiratori A."/>
            <person name="Sudo H."/>
            <person name="Hosoiri T."/>
            <person name="Kaku Y."/>
            <person name="Kodaira H."/>
            <person name="Kondo H."/>
            <person name="Sugawara M."/>
            <person name="Takahashi M."/>
            <person name="Kanda K."/>
            <person name="Yokoi T."/>
            <person name="Furuya T."/>
            <person name="Kikkawa E."/>
            <person name="Omura Y."/>
            <person name="Abe K."/>
            <person name="Kamihara K."/>
            <person name="Katsuta N."/>
            <person name="Sato K."/>
            <person name="Tanikawa M."/>
            <person name="Yamazaki M."/>
            <person name="Ninomiya K."/>
            <person name="Ishibashi T."/>
            <person name="Yamashita H."/>
            <person name="Murakawa K."/>
            <person name="Fujimori K."/>
            <person name="Tanai H."/>
            <person name="Kimata M."/>
            <person name="Watanabe M."/>
            <person name="Hiraoka S."/>
            <person name="Chiba Y."/>
            <person name="Ishida S."/>
            <person name="Ono Y."/>
            <person name="Takiguchi S."/>
            <person name="Watanabe S."/>
            <person name="Yosida M."/>
            <person name="Hotuta T."/>
            <person name="Kusano J."/>
            <person name="Kanehori K."/>
            <person name="Takahashi-Fujii A."/>
            <person name="Hara H."/>
            <person name="Tanase T.-O."/>
            <person name="Nomura Y."/>
            <person name="Togiya S."/>
            <person name="Komai F."/>
            <person name="Hara R."/>
            <person name="Takeuchi K."/>
            <person name="Arita M."/>
            <person name="Imose N."/>
            <person name="Musashino K."/>
            <person name="Yuuki H."/>
            <person name="Oshima A."/>
            <person name="Sasaki N."/>
            <person name="Aotsuka S."/>
            <person name="Yoshikawa Y."/>
            <person name="Matsunawa H."/>
            <person name="Ichihara T."/>
            <person name="Shiohata N."/>
            <person name="Sano S."/>
            <person name="Moriya S."/>
            <person name="Momiyama H."/>
            <person name="Satoh N."/>
            <person name="Takami S."/>
            <person name="Terashima Y."/>
            <person name="Suzuki O."/>
            <person name="Nakagawa S."/>
            <person name="Senoh A."/>
            <person name="Mizoguchi H."/>
            <person name="Goto Y."/>
            <person name="Shimizu F."/>
            <person name="Wakebe H."/>
            <person name="Hishigaki H."/>
            <person name="Watanabe T."/>
            <person name="Sugiyama A."/>
            <person name="Takemoto M."/>
            <person name="Kawakami B."/>
            <person name="Yamazaki M."/>
            <person name="Watanabe K."/>
            <person name="Kumagai A."/>
            <person name="Itakura S."/>
            <person name="Fukuzumi Y."/>
            <person name="Fujimori Y."/>
            <person name="Komiyama M."/>
            <person name="Tashiro H."/>
            <person name="Tanigami A."/>
            <person name="Fujiwara T."/>
            <person name="Ono T."/>
            <person name="Yamada K."/>
            <person name="Fujii Y."/>
            <person name="Ozaki K."/>
            <person name="Hirao M."/>
            <person name="Ohmori Y."/>
            <person name="Kawabata A."/>
            <person name="Hikiji T."/>
            <person name="Kobatake N."/>
            <person name="Inagaki H."/>
            <person name="Ikema Y."/>
            <person name="Okamoto S."/>
            <person name="Okitani R."/>
            <person name="Kawakami T."/>
            <person name="Noguchi S."/>
            <person name="Itoh T."/>
            <person name="Shigeta K."/>
            <person name="Senba T."/>
            <person name="Matsumura K."/>
            <person name="Nakajima Y."/>
            <person name="Mizuno T."/>
            <person name="Morinaga M."/>
            <person name="Sasaki M."/>
            <person name="Togashi T."/>
            <person name="Oyama M."/>
            <person name="Hata H."/>
            <person name="Watanabe M."/>
            <person name="Komatsu T."/>
            <person name="Mizushima-Sugano J."/>
            <person name="Satoh T."/>
            <person name="Shirai Y."/>
            <person name="Takahashi Y."/>
            <person name="Nakagawa K."/>
            <person name="Okumura K."/>
            <person name="Nagase T."/>
            <person name="Nomura N."/>
            <person name="Kikuchi H."/>
            <person name="Masuho Y."/>
            <person name="Yamashita R."/>
            <person name="Nakai K."/>
            <person name="Yada T."/>
            <person name="Nakamura Y."/>
            <person name="Ohara O."/>
            <person name="Isogai T."/>
            <person name="Sugano S."/>
        </authorList>
    </citation>
    <scope>NUCLEOTIDE SEQUENCE [LARGE SCALE MRNA] (ISOFORM 1)</scope>
    <scope>VARIANT VAL-227</scope>
    <source>
        <tissue>Thalamus</tissue>
    </source>
</reference>
<reference key="8">
    <citation type="submission" date="2005-06" db="EMBL/GenBank/DDBJ databases">
        <authorList>
            <consortium name="NIEHS SNPs program"/>
        </authorList>
    </citation>
    <scope>NUCLEOTIDE SEQUENCE [GENOMIC DNA]</scope>
    <scope>VARIANT VAL-227</scope>
</reference>
<reference key="9">
    <citation type="journal article" date="2006" name="Nature">
        <title>The DNA sequence and biological annotation of human chromosome 1.</title>
        <authorList>
            <person name="Gregory S.G."/>
            <person name="Barlow K.F."/>
            <person name="McLay K.E."/>
            <person name="Kaul R."/>
            <person name="Swarbreck D."/>
            <person name="Dunham A."/>
            <person name="Scott C.E."/>
            <person name="Howe K.L."/>
            <person name="Woodfine K."/>
            <person name="Spencer C.C.A."/>
            <person name="Jones M.C."/>
            <person name="Gillson C."/>
            <person name="Searle S."/>
            <person name="Zhou Y."/>
            <person name="Kokocinski F."/>
            <person name="McDonald L."/>
            <person name="Evans R."/>
            <person name="Phillips K."/>
            <person name="Atkinson A."/>
            <person name="Cooper R."/>
            <person name="Jones C."/>
            <person name="Hall R.E."/>
            <person name="Andrews T.D."/>
            <person name="Lloyd C."/>
            <person name="Ainscough R."/>
            <person name="Almeida J.P."/>
            <person name="Ambrose K.D."/>
            <person name="Anderson F."/>
            <person name="Andrew R.W."/>
            <person name="Ashwell R.I.S."/>
            <person name="Aubin K."/>
            <person name="Babbage A.K."/>
            <person name="Bagguley C.L."/>
            <person name="Bailey J."/>
            <person name="Beasley H."/>
            <person name="Bethel G."/>
            <person name="Bird C.P."/>
            <person name="Bray-Allen S."/>
            <person name="Brown J.Y."/>
            <person name="Brown A.J."/>
            <person name="Buckley D."/>
            <person name="Burton J."/>
            <person name="Bye J."/>
            <person name="Carder C."/>
            <person name="Chapman J.C."/>
            <person name="Clark S.Y."/>
            <person name="Clarke G."/>
            <person name="Clee C."/>
            <person name="Cobley V."/>
            <person name="Collier R.E."/>
            <person name="Corby N."/>
            <person name="Coville G.J."/>
            <person name="Davies J."/>
            <person name="Deadman R."/>
            <person name="Dunn M."/>
            <person name="Earthrowl M."/>
            <person name="Ellington A.G."/>
            <person name="Errington H."/>
            <person name="Frankish A."/>
            <person name="Frankland J."/>
            <person name="French L."/>
            <person name="Garner P."/>
            <person name="Garnett J."/>
            <person name="Gay L."/>
            <person name="Ghori M.R.J."/>
            <person name="Gibson R."/>
            <person name="Gilby L.M."/>
            <person name="Gillett W."/>
            <person name="Glithero R.J."/>
            <person name="Grafham D.V."/>
            <person name="Griffiths C."/>
            <person name="Griffiths-Jones S."/>
            <person name="Grocock R."/>
            <person name="Hammond S."/>
            <person name="Harrison E.S.I."/>
            <person name="Hart E."/>
            <person name="Haugen E."/>
            <person name="Heath P.D."/>
            <person name="Holmes S."/>
            <person name="Holt K."/>
            <person name="Howden P.J."/>
            <person name="Hunt A.R."/>
            <person name="Hunt S.E."/>
            <person name="Hunter G."/>
            <person name="Isherwood J."/>
            <person name="James R."/>
            <person name="Johnson C."/>
            <person name="Johnson D."/>
            <person name="Joy A."/>
            <person name="Kay M."/>
            <person name="Kershaw J.K."/>
            <person name="Kibukawa M."/>
            <person name="Kimberley A.M."/>
            <person name="King A."/>
            <person name="Knights A.J."/>
            <person name="Lad H."/>
            <person name="Laird G."/>
            <person name="Lawlor S."/>
            <person name="Leongamornlert D.A."/>
            <person name="Lloyd D.M."/>
            <person name="Loveland J."/>
            <person name="Lovell J."/>
            <person name="Lush M.J."/>
            <person name="Lyne R."/>
            <person name="Martin S."/>
            <person name="Mashreghi-Mohammadi M."/>
            <person name="Matthews L."/>
            <person name="Matthews N.S.W."/>
            <person name="McLaren S."/>
            <person name="Milne S."/>
            <person name="Mistry S."/>
            <person name="Moore M.J.F."/>
            <person name="Nickerson T."/>
            <person name="O'Dell C.N."/>
            <person name="Oliver K."/>
            <person name="Palmeiri A."/>
            <person name="Palmer S.A."/>
            <person name="Parker A."/>
            <person name="Patel D."/>
            <person name="Pearce A.V."/>
            <person name="Peck A.I."/>
            <person name="Pelan S."/>
            <person name="Phelps K."/>
            <person name="Phillimore B.J."/>
            <person name="Plumb R."/>
            <person name="Rajan J."/>
            <person name="Raymond C."/>
            <person name="Rouse G."/>
            <person name="Saenphimmachak C."/>
            <person name="Sehra H.K."/>
            <person name="Sheridan E."/>
            <person name="Shownkeen R."/>
            <person name="Sims S."/>
            <person name="Skuce C.D."/>
            <person name="Smith M."/>
            <person name="Steward C."/>
            <person name="Subramanian S."/>
            <person name="Sycamore N."/>
            <person name="Tracey A."/>
            <person name="Tromans A."/>
            <person name="Van Helmond Z."/>
            <person name="Wall M."/>
            <person name="Wallis J.M."/>
            <person name="White S."/>
            <person name="Whitehead S.L."/>
            <person name="Wilkinson J.E."/>
            <person name="Willey D.L."/>
            <person name="Williams H."/>
            <person name="Wilming L."/>
            <person name="Wray P.W."/>
            <person name="Wu Z."/>
            <person name="Coulson A."/>
            <person name="Vaudin M."/>
            <person name="Sulston J.E."/>
            <person name="Durbin R.M."/>
            <person name="Hubbard T."/>
            <person name="Wooster R."/>
            <person name="Dunham I."/>
            <person name="Carter N.P."/>
            <person name="McVean G."/>
            <person name="Ross M.T."/>
            <person name="Harrow J."/>
            <person name="Olson M.V."/>
            <person name="Beck S."/>
            <person name="Rogers J."/>
            <person name="Bentley D.R."/>
        </authorList>
    </citation>
    <scope>NUCLEOTIDE SEQUENCE [LARGE SCALE GENOMIC DNA]</scope>
</reference>
<reference key="10">
    <citation type="submission" date="2005-09" db="EMBL/GenBank/DDBJ databases">
        <authorList>
            <person name="Mural R.J."/>
            <person name="Istrail S."/>
            <person name="Sutton G.G."/>
            <person name="Florea L."/>
            <person name="Halpern A.L."/>
            <person name="Mobarry C.M."/>
            <person name="Lippert R."/>
            <person name="Walenz B."/>
            <person name="Shatkay H."/>
            <person name="Dew I."/>
            <person name="Miller J.R."/>
            <person name="Flanigan M.J."/>
            <person name="Edwards N.J."/>
            <person name="Bolanos R."/>
            <person name="Fasulo D."/>
            <person name="Halldorsson B.V."/>
            <person name="Hannenhalli S."/>
            <person name="Turner R."/>
            <person name="Yooseph S."/>
            <person name="Lu F."/>
            <person name="Nusskern D.R."/>
            <person name="Shue B.C."/>
            <person name="Zheng X.H."/>
            <person name="Zhong F."/>
            <person name="Delcher A.L."/>
            <person name="Huson D.H."/>
            <person name="Kravitz S.A."/>
            <person name="Mouchard L."/>
            <person name="Reinert K."/>
            <person name="Remington K.A."/>
            <person name="Clark A.G."/>
            <person name="Waterman M.S."/>
            <person name="Eichler E.E."/>
            <person name="Adams M.D."/>
            <person name="Hunkapiller M.W."/>
            <person name="Myers E.W."/>
            <person name="Venter J.C."/>
        </authorList>
    </citation>
    <scope>NUCLEOTIDE SEQUENCE [LARGE SCALE GENOMIC DNA]</scope>
</reference>
<reference key="11">
    <citation type="journal article" date="2004" name="Genome Res.">
        <title>The status, quality, and expansion of the NIH full-length cDNA project: the Mammalian Gene Collection (MGC).</title>
        <authorList>
            <consortium name="The MGC Project Team"/>
        </authorList>
    </citation>
    <scope>NUCLEOTIDE SEQUENCE [LARGE SCALE MRNA] (ISOFORM 1)</scope>
    <source>
        <tissue>Mammary gland</tissue>
        <tissue>Placenta</tissue>
    </source>
</reference>
<reference key="12">
    <citation type="journal article" date="2000" name="Leuk. Res.">
        <title>Acute myeloid leukemia possessing jumping translocation is related to highly elevated levels of EAT/mcl-1, a Bcl-2 related gene with anti-apoptotic functions.</title>
        <authorList>
            <person name="Okita H."/>
            <person name="Umezawa A."/>
            <person name="Fukuma M."/>
            <person name="Hata J."/>
        </authorList>
    </citation>
    <scope>NUCLEOTIDE SEQUENCE [MRNA] OF 182-289 (ISOFORM 1)</scope>
    <scope>VARIANT VAL-227</scope>
    <source>
        <tissue>Ewing sarcoma</tissue>
    </source>
</reference>
<reference key="13">
    <citation type="journal article" date="2004" name="Oncogene">
        <title>Mcl-1 is required for Akata6 B-lymphoma cell survival and is converted to a cell death molecule by efficient caspase-mediated cleavage.</title>
        <authorList>
            <person name="Michels J."/>
            <person name="O'Neill J.W."/>
            <person name="Dallman C.L."/>
            <person name="Mouzakiti A."/>
            <person name="Habens F."/>
            <person name="Brimmell M."/>
            <person name="Zhang K.Y.J."/>
            <person name="Craig R.W."/>
            <person name="Marcusson E.G."/>
            <person name="Johnson P.W.M."/>
            <person name="Packham G."/>
        </authorList>
    </citation>
    <scope>PROTEIN SEQUENCE OF N-TERMINUS OF FRAGMENTS OBTAINED BY CASPASE CLEAVAGE</scope>
    <scope>MUTAGENESIS OF ASP-127 AND ASP-157</scope>
</reference>
<reference key="14">
    <citation type="journal article" date="1998" name="Mol. Cell. Biol.">
        <title>Mcl-1 is an immediate-early gene activated by the granulocyte-macrophage colony-stimulating factor (GM-CSF) signaling pathway and is one component of the GM-CSF viability response.</title>
        <authorList>
            <person name="Chao J.-R."/>
            <person name="Wang J.-M."/>
            <person name="Lee S.-F."/>
            <person name="Peng H.-W."/>
            <person name="Lin Y.-H."/>
            <person name="Chou C.-H."/>
            <person name="Li J.-C."/>
            <person name="Huang H.-M."/>
            <person name="Chou C.-K."/>
            <person name="Kuo M.-L."/>
            <person name="Yen J.J.-Y."/>
            <person name="Yang-Yen H.-F."/>
        </authorList>
    </citation>
    <scope>INDUCTION</scope>
</reference>
<reference key="15">
    <citation type="journal article" date="2002" name="J. Biol. Chem.">
        <title>Physical and functional interaction between myeloid cell leukemia 1 protein (MCL1) and fortilin. The potential role of MCL1 as a fortilin chaperone.</title>
        <authorList>
            <person name="Zhang D."/>
            <person name="Li F."/>
            <person name="Weidner D."/>
            <person name="Mnjoyan Z.H."/>
            <person name="Fujise K."/>
        </authorList>
    </citation>
    <scope>INTERACTION WITH TPT1</scope>
    <scope>SUBCELLULAR LOCATION</scope>
</reference>
<reference key="16">
    <citation type="journal article" date="2002" name="J. Biol. Chem.">
        <title>Phosphorylation and inactivation of myeloid cell leukemia 1 by JNK in response to oxidative stress.</title>
        <authorList>
            <person name="Inoshita S."/>
            <person name="Takeda K."/>
            <person name="Hatai T."/>
            <person name="Terada Y."/>
            <person name="Sano M."/>
            <person name="Hata J."/>
            <person name="Umezawa A."/>
            <person name="Ichijo H."/>
        </authorList>
    </citation>
    <scope>PHOSPHORYLATION AT SER-121 AND THR-163</scope>
</reference>
<reference key="17">
    <citation type="journal article" date="2004" name="Nat. Cell Biol.">
        <title>Mitochondrial p53 activates Bak and causes disruption of a Bak-Mcl1 complex.</title>
        <authorList>
            <person name="Leu J.I.-J."/>
            <person name="Dumont P."/>
            <person name="Hafey M."/>
            <person name="Murphy M.E."/>
            <person name="George D.L."/>
        </authorList>
    </citation>
    <scope>INTERACTION WITH BAK1</scope>
    <scope>SUBCELLULAR LOCATION</scope>
</reference>
<reference key="18">
    <citation type="journal article" date="2004" name="Oncogene">
        <title>MCL1 is phosphorylated in the PEST region and stabilized upon ERK activation in viable cells, and at additional sites with cytotoxic okadaic acid or taxol.</title>
        <authorList>
            <person name="Domina A.M."/>
            <person name="Vrana J.A."/>
            <person name="Gregory M.A."/>
            <person name="Hann S.R."/>
            <person name="Craig R.W."/>
        </authorList>
    </citation>
    <scope>PHOSPHORYLATION AT THR-163</scope>
    <scope>MUTAGENESIS OF SER-162 AND THR-163</scope>
</reference>
<reference key="19">
    <citation type="journal article" date="2005" name="Cell">
        <title>Mule/ARF-BP1, a BH3-only E3 ubiquitin ligase, catalyzes the polyubiquitination of Mcl-1 and regulates apoptosis.</title>
        <authorList>
            <person name="Zhong Q."/>
            <person name="Gao W."/>
            <person name="Du F."/>
            <person name="Wang X."/>
        </authorList>
    </citation>
    <scope>UBIQUITINATION</scope>
    <scope>MUTAGENESIS OF LYS-5; LYS-40; LYS-136; LYS-194; LYS-197; LYS-208 AND LYS-234</scope>
</reference>
<reference key="20">
    <citation type="journal article" date="2006" name="Mol. Cell">
        <title>Glycogen synthase kinase-3 regulates mitochondrial outer membrane permeabilization and apoptosis by destabilization of MCL-1.</title>
        <authorList>
            <person name="Maurer U."/>
            <person name="Charvet C."/>
            <person name="Wagman A.S."/>
            <person name="Dejardin E."/>
            <person name="Green D.R."/>
        </authorList>
    </citation>
    <scope>FUNCTION AS INHIBITOR OF APOPTOSIS</scope>
    <scope>PHOSPHORYLATION AT SER-159 BY GSK3-ALPHA AND GSK3-BETA</scope>
    <scope>UBIQUITINATION</scope>
    <scope>MUTAGENESIS OF SER-159</scope>
</reference>
<reference key="21">
    <citation type="journal article" date="2008" name="Proc. Natl. Acad. Sci. U.S.A.">
        <title>A quantitative atlas of mitotic phosphorylation.</title>
        <authorList>
            <person name="Dephoure N."/>
            <person name="Zhou C."/>
            <person name="Villen J."/>
            <person name="Beausoleil S.A."/>
            <person name="Bakalarski C.E."/>
            <person name="Elledge S.J."/>
            <person name="Gygi S.P."/>
        </authorList>
    </citation>
    <scope>IDENTIFICATION BY MASS SPECTROMETRY [LARGE SCALE ANALYSIS]</scope>
    <source>
        <tissue>Cervix carcinoma</tissue>
    </source>
</reference>
<reference key="22">
    <citation type="journal article" date="2012" name="PLoS ONE">
        <title>Serine 162, an essential residue for the mitochondrial localization, stability and anti-apoptotic function of Mcl-1.</title>
        <authorList>
            <person name="Thomas L.W."/>
            <person name="Lam C."/>
            <person name="Clark R.E."/>
            <person name="White M.R."/>
            <person name="Spiller D.G."/>
            <person name="Moots R.J."/>
            <person name="Edwards S.W."/>
        </authorList>
    </citation>
    <scope>SUBCELLULAR LOCATION</scope>
    <scope>PHOSPHORYLATION AT SER-162 AND THR-163</scope>
    <scope>MUTAGENESIS OF SER-162</scope>
</reference>
<reference key="23">
    <citation type="journal article" date="2012" name="Protein Cell">
        <title>Human Bop is a novel BH3-only member of the Bcl-2 protein family.</title>
        <authorList>
            <person name="Zhang X."/>
            <person name="Weng C."/>
            <person name="Li Y."/>
            <person name="Wang X."/>
            <person name="Jiang C."/>
            <person name="Li X."/>
            <person name="Xu Y."/>
            <person name="Chen Q."/>
            <person name="Pan L."/>
            <person name="Tang H."/>
        </authorList>
    </citation>
    <scope>INTERACTION WITH RTL10/BOP</scope>
</reference>
<reference key="24">
    <citation type="journal article" date="2016" name="EMBO Rep.">
        <title>The deubiquitinase Usp27x stabilizes the BH3-only protein Bim and enhances apoptosis.</title>
        <authorList>
            <person name="Weber A."/>
            <person name="Heinlein M."/>
            <person name="Dengjel J."/>
            <person name="Alber C."/>
            <person name="Singh P.K."/>
            <person name="Haecker G."/>
        </authorList>
    </citation>
    <scope>INTERACTION WITH BCL2L11</scope>
</reference>
<reference key="25">
    <citation type="journal article" date="2022" name="Biochem. Biophys. Res. Commun.">
        <title>The deubiquitinating enzyme USP20 regulates the stability of the MCL1 protein.</title>
        <authorList>
            <person name="Feng J."/>
            <person name="Liu P."/>
            <person name="Li X."/>
            <person name="Zhang D."/>
            <person name="Lin H."/>
            <person name="Hou Z."/>
            <person name="Guo C."/>
            <person name="Niu Y."/>
            <person name="Dai B."/>
            <person name="Wang O."/>
            <person name="Qi M."/>
            <person name="Wang H."/>
            <person name="Zhou H."/>
        </authorList>
    </citation>
    <scope>DEUBIQUITINATION BY USP20</scope>
</reference>
<reference key="26">
    <citation type="journal article" date="2007" name="Proc. Natl. Acad. Sci. U.S.A.">
        <title>Structural insights into the degradation of Mcl-1 induced by BH3 domains.</title>
        <authorList>
            <person name="Czabotar P.E."/>
            <person name="Lee E.F."/>
            <person name="van Delft M.F."/>
            <person name="Day C.L."/>
            <person name="Smith B.J."/>
            <person name="Huang D.C.S."/>
            <person name="Fairlie W.D."/>
            <person name="Hinds M.G."/>
            <person name="Colman P.M."/>
        </authorList>
    </citation>
    <scope>X-RAY CRYSTALLOGRAPHY (1.55 ANGSTROMS) OF 151-307 IN COMPLEXES WITH PMAIP1 AND BCL2L11</scope>
</reference>
<reference key="27">
    <citation type="journal article" date="2010" name="Nat. Chem. Biol.">
        <title>The MCL-1 BH3 helix is an exclusive MCL-1 inhibitor and apoptosis sensitizer.</title>
        <authorList>
            <person name="Stewart M.L."/>
            <person name="Fire E."/>
            <person name="Keating A.E."/>
            <person name="Walensky L.D."/>
        </authorList>
    </citation>
    <scope>X-RAY CRYSTALLOGRAPHY (2.0 ANGSTROMS) OF 172-327 IN COMPLEX WITH BCL2L11</scope>
</reference>
<reference key="28">
    <citation type="journal article" date="2008" name="Nature">
        <title>DNA sequencing of a cytogenetically normal acute myeloid leukaemia genome.</title>
        <authorList>
            <person name="Ley T.J."/>
            <person name="Mardis E.R."/>
            <person name="Ding L."/>
            <person name="Fulton B."/>
            <person name="McLellan M.D."/>
            <person name="Chen K."/>
            <person name="Dooling D."/>
            <person name="Dunford-Shore B.H."/>
            <person name="McGrath S."/>
            <person name="Hickenbotham M."/>
            <person name="Cook L."/>
            <person name="Abbott R."/>
            <person name="Larson D.E."/>
            <person name="Koboldt D.C."/>
            <person name="Pohl C."/>
            <person name="Smith S."/>
            <person name="Hawkins A."/>
            <person name="Abbott S."/>
            <person name="Locke D."/>
            <person name="Hillier L.W."/>
            <person name="Miner T."/>
            <person name="Fulton L."/>
            <person name="Magrini V."/>
            <person name="Wylie T."/>
            <person name="Glasscock J."/>
            <person name="Conyers J."/>
            <person name="Sander N."/>
            <person name="Shi X."/>
            <person name="Osborne J.R."/>
            <person name="Minx P."/>
            <person name="Gordon D."/>
            <person name="Chinwalla A."/>
            <person name="Zhao Y."/>
            <person name="Ries R.E."/>
            <person name="Payton J.E."/>
            <person name="Westervelt P."/>
            <person name="Tomasson M.H."/>
            <person name="Watson M."/>
            <person name="Baty J."/>
            <person name="Ivanovich J."/>
            <person name="Heath S."/>
            <person name="Shannon W.D."/>
            <person name="Nagarajan R."/>
            <person name="Walter M.J."/>
            <person name="Link D.C."/>
            <person name="Graubert T.A."/>
            <person name="DiPersio J.F."/>
            <person name="Wilson R.K."/>
        </authorList>
    </citation>
    <scope>VARIANT [LARGE SCALE ANALYSIS] LEU-231</scope>
</reference>